<accession>Q99PF4</accession>
<accession>E9QP63</accession>
<accession>Q5QGS3</accession>
<accession>Q5QGS4</accession>
<accession>Q5QGS7</accession>
<accession>Q5QGS8</accession>
<accession>Q99NH1</accession>
<accession>Q9D4N9</accession>
<evidence type="ECO:0000250" key="1">
    <source>
        <dbReference type="UniProtKB" id="P12830"/>
    </source>
</evidence>
<evidence type="ECO:0000250" key="2">
    <source>
        <dbReference type="UniProtKB" id="Q9H251"/>
    </source>
</evidence>
<evidence type="ECO:0000255" key="3"/>
<evidence type="ECO:0000255" key="4">
    <source>
        <dbReference type="PROSITE-ProRule" id="PRU00043"/>
    </source>
</evidence>
<evidence type="ECO:0000269" key="5">
    <source>
    </source>
</evidence>
<evidence type="ECO:0000269" key="6">
    <source>
    </source>
</evidence>
<evidence type="ECO:0000269" key="7">
    <source>
    </source>
</evidence>
<evidence type="ECO:0000269" key="8">
    <source>
    </source>
</evidence>
<evidence type="ECO:0000269" key="9">
    <source>
    </source>
</evidence>
<evidence type="ECO:0000269" key="10">
    <source>
    </source>
</evidence>
<evidence type="ECO:0000269" key="11">
    <source>
    </source>
</evidence>
<evidence type="ECO:0000303" key="12">
    <source>
    </source>
</evidence>
<evidence type="ECO:0000305" key="13"/>
<evidence type="ECO:0007829" key="14">
    <source>
        <dbReference type="PDB" id="3MVS"/>
    </source>
</evidence>
<evidence type="ECO:0007829" key="15">
    <source>
        <dbReference type="PDB" id="4APX"/>
    </source>
</evidence>
<evidence type="ECO:0007829" key="16">
    <source>
        <dbReference type="PDB" id="5I8D"/>
    </source>
</evidence>
<evidence type="ECO:0007829" key="17">
    <source>
        <dbReference type="PDB" id="5TFK"/>
    </source>
</evidence>
<evidence type="ECO:0007829" key="18">
    <source>
        <dbReference type="PDB" id="5UN2"/>
    </source>
</evidence>
<evidence type="ECO:0007829" key="19">
    <source>
        <dbReference type="PDB" id="5UZ8"/>
    </source>
</evidence>
<evidence type="ECO:0007829" key="20">
    <source>
        <dbReference type="PDB" id="5VH2"/>
    </source>
</evidence>
<evidence type="ECO:0007829" key="21">
    <source>
        <dbReference type="PDB" id="5WJM"/>
    </source>
</evidence>
<evidence type="ECO:0007829" key="22">
    <source>
        <dbReference type="PDB" id="7SKH"/>
    </source>
</evidence>
<evidence type="ECO:0007829" key="23">
    <source>
        <dbReference type="PDB" id="7SUU"/>
    </source>
</evidence>
<evidence type="ECO:0007829" key="24">
    <source>
        <dbReference type="PDB" id="7T3S"/>
    </source>
</evidence>
<evidence type="ECO:0007829" key="25">
    <source>
        <dbReference type="PDB" id="7T80"/>
    </source>
</evidence>
<protein>
    <recommendedName>
        <fullName>Cadherin-23</fullName>
    </recommendedName>
    <alternativeName>
        <fullName>Otocadherin</fullName>
    </alternativeName>
</protein>
<proteinExistence type="evidence at protein level"/>
<dbReference type="EMBL" id="AF308939">
    <property type="protein sequence ID" value="AAG52817.1"/>
    <property type="molecule type" value="mRNA"/>
</dbReference>
<dbReference type="EMBL" id="AY026062">
    <property type="protein sequence ID" value="AAK07670.1"/>
    <property type="molecule type" value="mRNA"/>
</dbReference>
<dbReference type="EMBL" id="AY563159">
    <property type="protein sequence ID" value="AAT72159.1"/>
    <property type="molecule type" value="mRNA"/>
</dbReference>
<dbReference type="EMBL" id="AY563160">
    <property type="protein sequence ID" value="AAT72160.1"/>
    <property type="molecule type" value="mRNA"/>
</dbReference>
<dbReference type="EMBL" id="AY563163">
    <property type="protein sequence ID" value="AAT72163.1"/>
    <property type="molecule type" value="mRNA"/>
</dbReference>
<dbReference type="EMBL" id="AY563164">
    <property type="protein sequence ID" value="AAT72164.1"/>
    <property type="molecule type" value="mRNA"/>
</dbReference>
<dbReference type="EMBL" id="AK016365">
    <property type="status" value="NOT_ANNOTATED_CDS"/>
    <property type="molecule type" value="mRNA"/>
</dbReference>
<dbReference type="EMBL" id="AC079082">
    <property type="status" value="NOT_ANNOTATED_CDS"/>
    <property type="molecule type" value="Genomic_DNA"/>
</dbReference>
<dbReference type="EMBL" id="AC079818">
    <property type="status" value="NOT_ANNOTATED_CDS"/>
    <property type="molecule type" value="Genomic_DNA"/>
</dbReference>
<dbReference type="EMBL" id="AC079819">
    <property type="status" value="NOT_ANNOTATED_CDS"/>
    <property type="molecule type" value="Genomic_DNA"/>
</dbReference>
<dbReference type="EMBL" id="AC153517">
    <property type="status" value="NOT_ANNOTATED_CDS"/>
    <property type="molecule type" value="Genomic_DNA"/>
</dbReference>
<dbReference type="RefSeq" id="NP_075859.2">
    <property type="nucleotide sequence ID" value="NM_023370.3"/>
</dbReference>
<dbReference type="RefSeq" id="XP_006513665.1">
    <property type="nucleotide sequence ID" value="XM_006513602.2"/>
</dbReference>
<dbReference type="RefSeq" id="XP_017169418.1">
    <property type="nucleotide sequence ID" value="XM_017313929.1"/>
</dbReference>
<dbReference type="PDB" id="2WBX">
    <property type="method" value="X-ray"/>
    <property type="resolution" value="1.50 A"/>
    <property type="chains" value="A=24-124"/>
</dbReference>
<dbReference type="PDB" id="2WCP">
    <property type="method" value="X-ray"/>
    <property type="resolution" value="1.98 A"/>
    <property type="chains" value="A=24-228"/>
</dbReference>
<dbReference type="PDB" id="2WD0">
    <property type="method" value="X-ray"/>
    <property type="resolution" value="2.74 A"/>
    <property type="chains" value="A/C=24-228"/>
</dbReference>
<dbReference type="PDB" id="2WHV">
    <property type="method" value="X-ray"/>
    <property type="resolution" value="2.36 A"/>
    <property type="chains" value="A=24-228"/>
</dbReference>
<dbReference type="PDB" id="3MVS">
    <property type="method" value="X-ray"/>
    <property type="resolution" value="1.10 A"/>
    <property type="chains" value="A=24-233"/>
</dbReference>
<dbReference type="PDB" id="4APX">
    <property type="method" value="X-ray"/>
    <property type="resolution" value="1.65 A"/>
    <property type="chains" value="A=24-228"/>
</dbReference>
<dbReference type="PDB" id="4AQ8">
    <property type="method" value="X-ray"/>
    <property type="resolution" value="2.63 A"/>
    <property type="chains" value="A/B=24-228"/>
</dbReference>
<dbReference type="PDB" id="4AQA">
    <property type="method" value="X-ray"/>
    <property type="resolution" value="1.96 A"/>
    <property type="chains" value="A=24-228"/>
</dbReference>
<dbReference type="PDB" id="4AQE">
    <property type="method" value="X-ray"/>
    <property type="resolution" value="2.27 A"/>
    <property type="chains" value="A=24-228"/>
</dbReference>
<dbReference type="PDB" id="4AXW">
    <property type="method" value="X-ray"/>
    <property type="resolution" value="2.23 A"/>
    <property type="chains" value="A=24-228"/>
</dbReference>
<dbReference type="PDB" id="4XXW">
    <property type="method" value="X-ray"/>
    <property type="resolution" value="2.26 A"/>
    <property type="chains" value="C/D=24-228"/>
</dbReference>
<dbReference type="PDB" id="5I8D">
    <property type="method" value="X-ray"/>
    <property type="resolution" value="2.69 A"/>
    <property type="chains" value="A=1949-2289"/>
</dbReference>
<dbReference type="PDB" id="5TFK">
    <property type="method" value="X-ray"/>
    <property type="resolution" value="2.80 A"/>
    <property type="chains" value="A=1949-2289"/>
</dbReference>
<dbReference type="PDB" id="5TFL">
    <property type="method" value="X-ray"/>
    <property type="resolution" value="3.56 A"/>
    <property type="chains" value="A/B=666-886"/>
</dbReference>
<dbReference type="PDB" id="5ULU">
    <property type="method" value="X-ray"/>
    <property type="resolution" value="2.85 A"/>
    <property type="chains" value="A=1955-2289"/>
</dbReference>
<dbReference type="PDB" id="5UN2">
    <property type="method" value="X-ray"/>
    <property type="resolution" value="2.96 A"/>
    <property type="chains" value="A=1955-2289"/>
</dbReference>
<dbReference type="PDB" id="5UZ8">
    <property type="method" value="X-ray"/>
    <property type="resolution" value="1.85 A"/>
    <property type="chains" value="A=2288-2607"/>
</dbReference>
<dbReference type="PDB" id="5VH2">
    <property type="method" value="X-ray"/>
    <property type="resolution" value="2.84 A"/>
    <property type="chains" value="A/B/C/D=1201-1412"/>
</dbReference>
<dbReference type="PDB" id="5VT8">
    <property type="method" value="X-ray"/>
    <property type="resolution" value="2.92 A"/>
    <property type="chains" value="A/B/C/D=2504-2715"/>
</dbReference>
<dbReference type="PDB" id="5WJM">
    <property type="method" value="X-ray"/>
    <property type="resolution" value="2.90 A"/>
    <property type="chains" value="A=1739-1954"/>
</dbReference>
<dbReference type="PDB" id="6N2E">
    <property type="method" value="X-ray"/>
    <property type="resolution" value="2.90 A"/>
    <property type="chains" value="C/D=24-228"/>
</dbReference>
<dbReference type="PDB" id="7SKH">
    <property type="method" value="X-ray"/>
    <property type="resolution" value="2.27 A"/>
    <property type="chains" value="A/B=1630-1847"/>
</dbReference>
<dbReference type="PDB" id="7SUU">
    <property type="method" value="X-ray"/>
    <property type="resolution" value="2.25 A"/>
    <property type="chains" value="A/B=2603-2842"/>
</dbReference>
<dbReference type="PDB" id="7T3S">
    <property type="method" value="X-ray"/>
    <property type="resolution" value="2.97 A"/>
    <property type="chains" value="A=769-991"/>
</dbReference>
<dbReference type="PDB" id="7T80">
    <property type="method" value="X-ray"/>
    <property type="resolution" value="2.30 A"/>
    <property type="chains" value="A/B=1847-2063"/>
</dbReference>
<dbReference type="PDB" id="7U71">
    <property type="method" value="X-ray"/>
    <property type="resolution" value="1.98 A"/>
    <property type="chains" value="AAA=1307-1628"/>
</dbReference>
<dbReference type="PDB" id="7UQU">
    <property type="method" value="X-ray"/>
    <property type="resolution" value="1.98 A"/>
    <property type="chains" value="AAA/BBB=883-991"/>
</dbReference>
<dbReference type="PDB" id="8TRI">
    <property type="method" value="X-ray"/>
    <property type="resolution" value="3.72 A"/>
    <property type="chains" value="A/B/C=2603-3065"/>
</dbReference>
<dbReference type="PDBsum" id="2WBX"/>
<dbReference type="PDBsum" id="2WCP"/>
<dbReference type="PDBsum" id="2WD0"/>
<dbReference type="PDBsum" id="2WHV"/>
<dbReference type="PDBsum" id="3MVS"/>
<dbReference type="PDBsum" id="4APX"/>
<dbReference type="PDBsum" id="4AQ8"/>
<dbReference type="PDBsum" id="4AQA"/>
<dbReference type="PDBsum" id="4AQE"/>
<dbReference type="PDBsum" id="4AXW"/>
<dbReference type="PDBsum" id="4XXW"/>
<dbReference type="PDBsum" id="5I8D"/>
<dbReference type="PDBsum" id="5TFK"/>
<dbReference type="PDBsum" id="5TFL"/>
<dbReference type="PDBsum" id="5ULU"/>
<dbReference type="PDBsum" id="5UN2"/>
<dbReference type="PDBsum" id="5UZ8"/>
<dbReference type="PDBsum" id="5VH2"/>
<dbReference type="PDBsum" id="5VT8"/>
<dbReference type="PDBsum" id="5WJM"/>
<dbReference type="PDBsum" id="6N2E"/>
<dbReference type="PDBsum" id="7SKH"/>
<dbReference type="PDBsum" id="7SUU"/>
<dbReference type="PDBsum" id="7T3S"/>
<dbReference type="PDBsum" id="7T80"/>
<dbReference type="PDBsum" id="7U71"/>
<dbReference type="PDBsum" id="7UQU"/>
<dbReference type="PDBsum" id="8TRI"/>
<dbReference type="SMR" id="Q99PF4"/>
<dbReference type="BioGRID" id="204475">
    <property type="interactions" value="3"/>
</dbReference>
<dbReference type="CORUM" id="Q99PF4"/>
<dbReference type="DIP" id="DIP-42152N"/>
<dbReference type="FunCoup" id="Q99PF4">
    <property type="interactions" value="126"/>
</dbReference>
<dbReference type="IntAct" id="Q99PF4">
    <property type="interactions" value="3"/>
</dbReference>
<dbReference type="MINT" id="Q99PF4"/>
<dbReference type="STRING" id="10090.ENSMUSP00000101104"/>
<dbReference type="GlyCosmos" id="Q99PF4">
    <property type="glycosylation" value="42 sites, No reported glycans"/>
</dbReference>
<dbReference type="GlyGen" id="Q99PF4">
    <property type="glycosylation" value="43 sites, 7 N-linked glycans (10 sites)"/>
</dbReference>
<dbReference type="iPTMnet" id="Q99PF4"/>
<dbReference type="PhosphoSitePlus" id="Q99PF4"/>
<dbReference type="jPOST" id="Q99PF4"/>
<dbReference type="PaxDb" id="10090-ENSMUSP00000101101"/>
<dbReference type="ProteomicsDB" id="273572">
    <molecule id="Q99PF4-1"/>
</dbReference>
<dbReference type="ProteomicsDB" id="273573">
    <molecule id="Q99PF4-2"/>
</dbReference>
<dbReference type="ProteomicsDB" id="273574">
    <molecule id="Q99PF4-3"/>
</dbReference>
<dbReference type="ProteomicsDB" id="273575">
    <molecule id="Q99PF4-4"/>
</dbReference>
<dbReference type="ProteomicsDB" id="273576">
    <molecule id="Q99PF4-5"/>
</dbReference>
<dbReference type="ProteomicsDB" id="273577">
    <molecule id="Q99PF4-6"/>
</dbReference>
<dbReference type="Pumba" id="Q99PF4"/>
<dbReference type="ABCD" id="Q99PF4">
    <property type="antibodies" value="1 sequenced antibody"/>
</dbReference>
<dbReference type="Antibodypedia" id="2330">
    <property type="antibodies" value="267 antibodies from 34 providers"/>
</dbReference>
<dbReference type="DNASU" id="22295"/>
<dbReference type="Ensembl" id="ENSMUST00000105461.10">
    <molecule id="Q99PF4-1"/>
    <property type="protein sequence ID" value="ENSMUSP00000101101.4"/>
    <property type="gene ID" value="ENSMUSG00000012819.17"/>
</dbReference>
<dbReference type="Ensembl" id="ENSMUST00000105463.9">
    <molecule id="Q99PF4-2"/>
    <property type="protein sequence ID" value="ENSMUSP00000101103.3"/>
    <property type="gene ID" value="ENSMUSG00000012819.17"/>
</dbReference>
<dbReference type="GeneID" id="22295"/>
<dbReference type="KEGG" id="mmu:22295"/>
<dbReference type="UCSC" id="uc033fpl.1">
    <molecule id="Q99PF4-1"/>
    <property type="organism name" value="mouse"/>
</dbReference>
<dbReference type="AGR" id="MGI:1890219"/>
<dbReference type="CTD" id="64072"/>
<dbReference type="MGI" id="MGI:1890219">
    <property type="gene designation" value="Cdh23"/>
</dbReference>
<dbReference type="VEuPathDB" id="HostDB:ENSMUSG00000012819"/>
<dbReference type="eggNOG" id="KOG3594">
    <property type="taxonomic scope" value="Eukaryota"/>
</dbReference>
<dbReference type="GeneTree" id="ENSGT00940000155245"/>
<dbReference type="InParanoid" id="Q99PF4"/>
<dbReference type="OMA" id="ITRPSHH"/>
<dbReference type="OrthoDB" id="9990384at2759"/>
<dbReference type="PhylomeDB" id="Q99PF4"/>
<dbReference type="TreeFam" id="TF316403"/>
<dbReference type="BioGRID-ORCS" id="22295">
    <property type="hits" value="0 hits in 76 CRISPR screens"/>
</dbReference>
<dbReference type="ChiTaRS" id="Cdh23">
    <property type="organism name" value="mouse"/>
</dbReference>
<dbReference type="EvolutionaryTrace" id="Q99PF4"/>
<dbReference type="PRO" id="PR:Q99PF4"/>
<dbReference type="Proteomes" id="UP000000589">
    <property type="component" value="Chromosome 10"/>
</dbReference>
<dbReference type="RNAct" id="Q99PF4">
    <property type="molecule type" value="protein"/>
</dbReference>
<dbReference type="Bgee" id="ENSMUSG00000012819">
    <property type="expression patterns" value="Expressed in spermatid and 65 other cell types or tissues"/>
</dbReference>
<dbReference type="ExpressionAtlas" id="Q99PF4">
    <property type="expression patterns" value="baseline and differential"/>
</dbReference>
<dbReference type="GO" id="GO:0005813">
    <property type="term" value="C:centrosome"/>
    <property type="evidence" value="ECO:0000314"/>
    <property type="project" value="MGI"/>
</dbReference>
<dbReference type="GO" id="GO:0098683">
    <property type="term" value="C:cochlear hair cell ribbon synapse"/>
    <property type="evidence" value="ECO:0000314"/>
    <property type="project" value="SynGO"/>
</dbReference>
<dbReference type="GO" id="GO:0060091">
    <property type="term" value="C:kinocilium"/>
    <property type="evidence" value="ECO:0000314"/>
    <property type="project" value="MGI"/>
</dbReference>
<dbReference type="GO" id="GO:0001917">
    <property type="term" value="C:photoreceptor inner segment"/>
    <property type="evidence" value="ECO:0000314"/>
    <property type="project" value="MGI"/>
</dbReference>
<dbReference type="GO" id="GO:0098684">
    <property type="term" value="C:photoreceptor ribbon synapse"/>
    <property type="evidence" value="ECO:0000314"/>
    <property type="project" value="SynGO"/>
</dbReference>
<dbReference type="GO" id="GO:0005886">
    <property type="term" value="C:plasma membrane"/>
    <property type="evidence" value="ECO:0000304"/>
    <property type="project" value="Reactome"/>
</dbReference>
<dbReference type="GO" id="GO:0032420">
    <property type="term" value="C:stereocilium"/>
    <property type="evidence" value="ECO:0000314"/>
    <property type="project" value="HGNC-UCL"/>
</dbReference>
<dbReference type="GO" id="GO:0032426">
    <property type="term" value="C:stereocilium tip"/>
    <property type="evidence" value="ECO:0000314"/>
    <property type="project" value="MGI"/>
</dbReference>
<dbReference type="GO" id="GO:0045202">
    <property type="term" value="C:synapse"/>
    <property type="evidence" value="ECO:0000314"/>
    <property type="project" value="MGI"/>
</dbReference>
<dbReference type="GO" id="GO:0005509">
    <property type="term" value="F:calcium ion binding"/>
    <property type="evidence" value="ECO:0007669"/>
    <property type="project" value="InterPro"/>
</dbReference>
<dbReference type="GO" id="GO:0060088">
    <property type="term" value="P:auditory receptor cell stereocilium organization"/>
    <property type="evidence" value="ECO:0000315"/>
    <property type="project" value="MGI"/>
</dbReference>
<dbReference type="GO" id="GO:0006816">
    <property type="term" value="P:calcium ion transport"/>
    <property type="evidence" value="ECO:0007669"/>
    <property type="project" value="Ensembl"/>
</dbReference>
<dbReference type="GO" id="GO:0016339">
    <property type="term" value="P:calcium-dependent cell-cell adhesion via plasma membrane cell adhesion molecules"/>
    <property type="evidence" value="ECO:0000250"/>
    <property type="project" value="MGI"/>
</dbReference>
<dbReference type="GO" id="GO:0007155">
    <property type="term" value="P:cell adhesion"/>
    <property type="evidence" value="ECO:0000304"/>
    <property type="project" value="MGI"/>
</dbReference>
<dbReference type="GO" id="GO:0090102">
    <property type="term" value="P:cochlea development"/>
    <property type="evidence" value="ECO:0000315"/>
    <property type="project" value="MGI"/>
</dbReference>
<dbReference type="GO" id="GO:0050957">
    <property type="term" value="P:equilibrioception"/>
    <property type="evidence" value="ECO:0007669"/>
    <property type="project" value="Ensembl"/>
</dbReference>
<dbReference type="GO" id="GO:0007156">
    <property type="term" value="P:homophilic cell adhesion via plasma membrane adhesion molecules"/>
    <property type="evidence" value="ECO:0007669"/>
    <property type="project" value="InterPro"/>
</dbReference>
<dbReference type="GO" id="GO:0042491">
    <property type="term" value="P:inner ear auditory receptor cell differentiation"/>
    <property type="evidence" value="ECO:0000315"/>
    <property type="project" value="MGI"/>
</dbReference>
<dbReference type="GO" id="GO:0048839">
    <property type="term" value="P:inner ear development"/>
    <property type="evidence" value="ECO:0000315"/>
    <property type="project" value="MGI"/>
</dbReference>
<dbReference type="GO" id="GO:0042472">
    <property type="term" value="P:inner ear morphogenesis"/>
    <property type="evidence" value="ECO:0000315"/>
    <property type="project" value="MGI"/>
</dbReference>
<dbReference type="GO" id="GO:0060122">
    <property type="term" value="P:inner ear receptor cell stereocilium organization"/>
    <property type="evidence" value="ECO:0000315"/>
    <property type="project" value="MGI"/>
</dbReference>
<dbReference type="GO" id="GO:0007626">
    <property type="term" value="P:locomotory behavior"/>
    <property type="evidence" value="ECO:0000315"/>
    <property type="project" value="MGI"/>
</dbReference>
<dbReference type="GO" id="GO:0045494">
    <property type="term" value="P:photoreceptor cell maintenance"/>
    <property type="evidence" value="ECO:0007669"/>
    <property type="project" value="Ensembl"/>
</dbReference>
<dbReference type="GO" id="GO:0051480">
    <property type="term" value="P:regulation of cytosolic calcium ion concentration"/>
    <property type="evidence" value="ECO:0007669"/>
    <property type="project" value="Ensembl"/>
</dbReference>
<dbReference type="GO" id="GO:0050953">
    <property type="term" value="P:sensory perception of light stimulus"/>
    <property type="evidence" value="ECO:0000315"/>
    <property type="project" value="MGI"/>
</dbReference>
<dbReference type="GO" id="GO:0007605">
    <property type="term" value="P:sensory perception of sound"/>
    <property type="evidence" value="ECO:0000315"/>
    <property type="project" value="MGI"/>
</dbReference>
<dbReference type="CDD" id="cd11304">
    <property type="entry name" value="Cadherin_repeat"/>
    <property type="match status" value="27"/>
</dbReference>
<dbReference type="FunFam" id="2.60.40.60:FF:000141">
    <property type="entry name" value="Cadherin 23"/>
    <property type="match status" value="1"/>
</dbReference>
<dbReference type="FunFam" id="2.60.40.60:FF:000142">
    <property type="entry name" value="Cadherin 23"/>
    <property type="match status" value="1"/>
</dbReference>
<dbReference type="FunFam" id="2.60.40.60:FF:000147">
    <property type="entry name" value="Cadherin 23"/>
    <property type="match status" value="1"/>
</dbReference>
<dbReference type="FunFam" id="2.60.40.60:FF:000173">
    <property type="entry name" value="Cadherin 23"/>
    <property type="match status" value="2"/>
</dbReference>
<dbReference type="FunFam" id="2.60.40.60:FF:000203">
    <property type="entry name" value="Cadherin 23"/>
    <property type="match status" value="1"/>
</dbReference>
<dbReference type="FunFam" id="2.60.40.60:FF:000228">
    <property type="entry name" value="Cadherin 23"/>
    <property type="match status" value="1"/>
</dbReference>
<dbReference type="FunFam" id="2.60.40.60:FF:000393">
    <property type="entry name" value="Cadherin-23"/>
    <property type="match status" value="1"/>
</dbReference>
<dbReference type="FunFam" id="2.60.40.60:FF:000098">
    <property type="entry name" value="cadherin-23 isoform X1"/>
    <property type="match status" value="1"/>
</dbReference>
<dbReference type="FunFam" id="2.60.40.60:FF:000104">
    <property type="entry name" value="cadherin-23 isoform X1"/>
    <property type="match status" value="1"/>
</dbReference>
<dbReference type="FunFam" id="2.60.40.60:FF:000130">
    <property type="entry name" value="cadherin-23 isoform X1"/>
    <property type="match status" value="1"/>
</dbReference>
<dbReference type="FunFam" id="2.60.40.60:FF:000135">
    <property type="entry name" value="cadherin-23 isoform X1"/>
    <property type="match status" value="1"/>
</dbReference>
<dbReference type="FunFam" id="2.60.40.60:FF:000146">
    <property type="entry name" value="cadherin-23 isoform X1"/>
    <property type="match status" value="1"/>
</dbReference>
<dbReference type="FunFam" id="2.60.40.60:FF:000155">
    <property type="entry name" value="cadherin-23 isoform X1"/>
    <property type="match status" value="1"/>
</dbReference>
<dbReference type="FunFam" id="2.60.40.60:FF:000156">
    <property type="entry name" value="cadherin-23 isoform X1"/>
    <property type="match status" value="1"/>
</dbReference>
<dbReference type="FunFam" id="2.60.40.60:FF:000160">
    <property type="entry name" value="cadherin-23 isoform X1"/>
    <property type="match status" value="1"/>
</dbReference>
<dbReference type="FunFam" id="2.60.40.60:FF:000164">
    <property type="entry name" value="cadherin-23 isoform X1"/>
    <property type="match status" value="1"/>
</dbReference>
<dbReference type="FunFam" id="2.60.40.60:FF:000166">
    <property type="entry name" value="cadherin-23 isoform X1"/>
    <property type="match status" value="1"/>
</dbReference>
<dbReference type="FunFam" id="2.60.40.60:FF:000172">
    <property type="entry name" value="cadherin-23 isoform X1"/>
    <property type="match status" value="1"/>
</dbReference>
<dbReference type="FunFam" id="2.60.40.60:FF:000175">
    <property type="entry name" value="cadherin-23 isoform X1"/>
    <property type="match status" value="1"/>
</dbReference>
<dbReference type="FunFam" id="2.60.40.60:FF:000206">
    <property type="entry name" value="cadherin-23 isoform X1"/>
    <property type="match status" value="1"/>
</dbReference>
<dbReference type="FunFam" id="2.60.40.60:FF:000020">
    <property type="entry name" value="Dachsous cadherin-related 1b"/>
    <property type="match status" value="1"/>
</dbReference>
<dbReference type="FunFam" id="2.60.40.60:FF:000100">
    <property type="entry name" value="protocadherin Fat 2"/>
    <property type="match status" value="1"/>
</dbReference>
<dbReference type="FunFam" id="2.60.40.60:FF:000060">
    <property type="entry name" value="Putative cadherin-23"/>
    <property type="match status" value="3"/>
</dbReference>
<dbReference type="FunFam" id="2.60.40.60:FF:000807">
    <property type="entry name" value="Uncharacterized protein"/>
    <property type="match status" value="1"/>
</dbReference>
<dbReference type="Gene3D" id="2.60.40.60">
    <property type="entry name" value="Cadherins"/>
    <property type="match status" value="27"/>
</dbReference>
<dbReference type="InterPro" id="IPR002126">
    <property type="entry name" value="Cadherin-like_dom"/>
</dbReference>
<dbReference type="InterPro" id="IPR015919">
    <property type="entry name" value="Cadherin-like_sf"/>
</dbReference>
<dbReference type="InterPro" id="IPR020894">
    <property type="entry name" value="Cadherin_CS"/>
</dbReference>
<dbReference type="PANTHER" id="PTHR24026">
    <property type="entry name" value="FAT ATYPICAL CADHERIN-RELATED"/>
    <property type="match status" value="1"/>
</dbReference>
<dbReference type="PANTHER" id="PTHR24026:SF126">
    <property type="entry name" value="PROTOCADHERIN FAT 4"/>
    <property type="match status" value="1"/>
</dbReference>
<dbReference type="Pfam" id="PF00028">
    <property type="entry name" value="Cadherin"/>
    <property type="match status" value="24"/>
</dbReference>
<dbReference type="PRINTS" id="PR00205">
    <property type="entry name" value="CADHERIN"/>
</dbReference>
<dbReference type="SMART" id="SM00112">
    <property type="entry name" value="CA"/>
    <property type="match status" value="26"/>
</dbReference>
<dbReference type="SUPFAM" id="SSF49313">
    <property type="entry name" value="Cadherin-like"/>
    <property type="match status" value="27"/>
</dbReference>
<dbReference type="PROSITE" id="PS00232">
    <property type="entry name" value="CADHERIN_1"/>
    <property type="match status" value="17"/>
</dbReference>
<dbReference type="PROSITE" id="PS50268">
    <property type="entry name" value="CADHERIN_2"/>
    <property type="match status" value="27"/>
</dbReference>
<gene>
    <name type="primary">Cdh23</name>
</gene>
<comment type="function">
    <text evidence="5">Cadherins are calcium-dependent cell adhesion proteins. They preferentially interact with themselves in a homophilic manner in connecting cells. CDH23 is required for establishing and/or maintaining the proper organization of the stereocilia bundle of hair cells in the cochlea and the vestibule during late embryonic/early postnatal development. It is part of the functional network formed by USH1C, USH1G, CDH23 and MYO7A that mediates mechanotransduction in cochlear hair cells. Required for normal hearing.</text>
</comment>
<comment type="subunit">
    <text evidence="2 7 8 9 10 11">Interacts with USH1C and USH1G (By similarity). antiparallel heterodimer with PCDH15. Isoform C1: Interacts with CAMSAP3; leading to inhibit CAMSAP3 ability to induce microtubule bundle formation (PubMed:27349180).</text>
</comment>
<comment type="interaction">
    <interactant intactId="EBI-7419021">
        <id>Q99PF4</id>
    </interactant>
    <interactant intactId="EBI-7418919">
        <id>Q9ES64-3</id>
        <label>Ush1c</label>
    </interactant>
    <organismsDiffer>false</organismsDiffer>
    <experiments>2</experiments>
</comment>
<comment type="interaction">
    <interactant intactId="EBI-15656347">
        <id>Q99PF4-1</id>
    </interactant>
    <interactant intactId="EBI-6556746">
        <id>Q99PJ1</id>
        <label>Pcdh15</label>
    </interactant>
    <organismsDiffer>false</organismsDiffer>
    <experiments>10</experiments>
</comment>
<comment type="subcellular location">
    <subcellularLocation>
        <location evidence="13">Cell membrane</location>
        <topology evidence="3">Single-pass type I membrane protein</topology>
    </subcellularLocation>
</comment>
<comment type="alternative products">
    <event type="alternative splicing"/>
    <isoform>
        <id>Q99PF4-1</id>
        <name>1</name>
        <sequence type="displayed"/>
    </isoform>
    <isoform>
        <id>Q99PF4-2</id>
        <name>2</name>
        <sequence type="described" ref="VSP_000648"/>
    </isoform>
    <isoform>
        <id>Q99PF4-3</id>
        <name>C1</name>
        <sequence type="described" ref="VSP_059242 VSP_059244"/>
    </isoform>
    <isoform>
        <id>Q99PF4-4</id>
        <name>B2</name>
        <sequence type="described" ref="VSP_059243 VSP_000648"/>
    </isoform>
    <isoform>
        <id>Q99PF4-5</id>
        <name>B1</name>
        <sequence type="described" ref="VSP_059243"/>
    </isoform>
    <isoform>
        <id>Q99PF4-6</id>
        <name>C2</name>
        <sequence type="described" ref="VSP_059242 VSP_000648"/>
    </isoform>
</comment>
<comment type="tissue specificity">
    <text evidence="5">In adult animals relatively high levels of expression are found in testis, skeletal muscle, heart, eye and thymus, and lower expression in kidney, lung and brain. Found in the sensory hair cells of the inner ear.</text>
</comment>
<comment type="domain">
    <text evidence="1">Three calcium ions are usually bound at the interface of each cadherin domain and rigidify the connections, imparting a strong curvature to the full-length ectodomain.</text>
</comment>
<comment type="domain">
    <text evidence="10">Cadherin repeats 1 and 2 mediate calcium-dependent heterophilic interaction with PCDH15.</text>
</comment>
<comment type="disease">
    <text evidence="5 6">Defects in Cdh23 are the cause of waltzer (v) phenotype. Waltzer mice are characterized by deafness and vestibular dysfunction due to degeneration of the neuroepithelium within the inner ear.</text>
</comment>
<feature type="signal peptide" evidence="3">
    <location>
        <begin position="1"/>
        <end position="23"/>
    </location>
</feature>
<feature type="chain" id="PRO_0000003825" description="Cadherin-23">
    <location>
        <begin position="24"/>
        <end position="3354"/>
    </location>
</feature>
<feature type="topological domain" description="Extracellular" evidence="3">
    <location>
        <begin position="24"/>
        <end position="3064"/>
    </location>
</feature>
<feature type="transmembrane region" description="Helical" evidence="3">
    <location>
        <begin position="3065"/>
        <end position="3085"/>
    </location>
</feature>
<feature type="topological domain" description="Cytoplasmic" evidence="3">
    <location>
        <begin position="3086"/>
        <end position="3354"/>
    </location>
</feature>
<feature type="domain" description="Cadherin 1" evidence="4">
    <location>
        <begin position="34"/>
        <end position="132"/>
    </location>
</feature>
<feature type="domain" description="Cadherin 2" evidence="4">
    <location>
        <begin position="133"/>
        <end position="236"/>
    </location>
</feature>
<feature type="domain" description="Cadherin 3" evidence="4">
    <location>
        <begin position="237"/>
        <end position="348"/>
    </location>
</feature>
<feature type="domain" description="Cadherin 4" evidence="4">
    <location>
        <begin position="349"/>
        <end position="460"/>
    </location>
</feature>
<feature type="domain" description="Cadherin 5" evidence="4">
    <location>
        <begin position="461"/>
        <end position="561"/>
    </location>
</feature>
<feature type="domain" description="Cadherin 6" evidence="4">
    <location>
        <begin position="562"/>
        <end position="671"/>
    </location>
</feature>
<feature type="domain" description="Cadherin 7" evidence="4">
    <location>
        <begin position="672"/>
        <end position="784"/>
    </location>
</feature>
<feature type="domain" description="Cadherin 8" evidence="4">
    <location>
        <begin position="779"/>
        <end position="890"/>
    </location>
</feature>
<feature type="domain" description="Cadherin 9" evidence="4">
    <location>
        <begin position="891"/>
        <end position="995"/>
    </location>
</feature>
<feature type="domain" description="Cadherin 10" evidence="4">
    <location>
        <begin position="996"/>
        <end position="1102"/>
    </location>
</feature>
<feature type="domain" description="Cadherin 11" evidence="4">
    <location>
        <begin position="1103"/>
        <end position="1208"/>
    </location>
</feature>
<feature type="domain" description="Cadherin 12" evidence="4">
    <location>
        <begin position="1210"/>
        <end position="1313"/>
    </location>
</feature>
<feature type="domain" description="Cadherin 13" evidence="4">
    <location>
        <begin position="1314"/>
        <end position="1418"/>
    </location>
</feature>
<feature type="domain" description="Cadherin 14" evidence="4">
    <location>
        <begin position="1420"/>
        <end position="1527"/>
    </location>
</feature>
<feature type="domain" description="Cadherin 15" evidence="4">
    <location>
        <begin position="1529"/>
        <end position="1634"/>
    </location>
</feature>
<feature type="domain" description="Cadherin 16" evidence="4">
    <location>
        <begin position="1635"/>
        <end position="1744"/>
    </location>
</feature>
<feature type="domain" description="Cadherin 17" evidence="4">
    <location>
        <begin position="1745"/>
        <end position="1851"/>
    </location>
</feature>
<feature type="domain" description="Cadherin 18" evidence="4">
    <location>
        <begin position="1852"/>
        <end position="1959"/>
    </location>
</feature>
<feature type="domain" description="Cadherin 19" evidence="4">
    <location>
        <begin position="1960"/>
        <end position="2069"/>
    </location>
</feature>
<feature type="domain" description="Cadherin 20" evidence="4">
    <location>
        <begin position="2070"/>
        <end position="2174"/>
    </location>
</feature>
<feature type="domain" description="Cadherin 21" evidence="4">
    <location>
        <begin position="2175"/>
        <end position="2293"/>
    </location>
</feature>
<feature type="domain" description="Cadherin 22" evidence="4">
    <location>
        <begin position="2297"/>
        <end position="2402"/>
    </location>
</feature>
<feature type="domain" description="Cadherin 23" evidence="4">
    <location>
        <begin position="2403"/>
        <end position="2509"/>
    </location>
</feature>
<feature type="domain" description="Cadherin 24" evidence="4">
    <location>
        <begin position="2510"/>
        <end position="2611"/>
    </location>
</feature>
<feature type="domain" description="Cadherin 25" evidence="4">
    <location>
        <begin position="2614"/>
        <end position="2722"/>
    </location>
</feature>
<feature type="domain" description="Cadherin 26" evidence="4">
    <location>
        <begin position="2729"/>
        <end position="2846"/>
    </location>
</feature>
<feature type="domain" description="Cadherin 27" evidence="4">
    <location>
        <begin position="2847"/>
        <end position="2975"/>
    </location>
</feature>
<feature type="glycosylation site" description="N-linked (GlcNAc...) asparagine" evidence="3">
    <location>
        <position position="155"/>
    </location>
</feature>
<feature type="glycosylation site" description="N-linked (GlcNAc...) asparagine" evidence="3">
    <location>
        <position position="206"/>
    </location>
</feature>
<feature type="glycosylation site" description="N-linked (GlcNAc...) asparagine" evidence="3">
    <location>
        <position position="349"/>
    </location>
</feature>
<feature type="glycosylation site" description="N-linked (GlcNAc...) asparagine" evidence="3">
    <location>
        <position position="393"/>
    </location>
</feature>
<feature type="glycosylation site" description="N-linked (GlcNAc...) asparagine" evidence="3">
    <location>
        <position position="434"/>
    </location>
</feature>
<feature type="glycosylation site" description="N-linked (GlcNAc...) asparagine" evidence="3">
    <location>
        <position position="466"/>
    </location>
</feature>
<feature type="glycosylation site" description="N-linked (GlcNAc...) asparagine" evidence="3">
    <location>
        <position position="472"/>
    </location>
</feature>
<feature type="glycosylation site" description="N-linked (GlcNAc...) asparagine" evidence="3">
    <location>
        <position position="602"/>
    </location>
</feature>
<feature type="glycosylation site" description="N-linked (GlcNAc...) asparagine" evidence="3">
    <location>
        <position position="694"/>
    </location>
</feature>
<feature type="glycosylation site" description="N-linked (GlcNAc...) asparagine" evidence="3">
    <location>
        <position position="765"/>
    </location>
</feature>
<feature type="glycosylation site" description="N-linked (GlcNAc...) asparagine" evidence="3">
    <location>
        <position position="810"/>
    </location>
</feature>
<feature type="glycosylation site" description="N-linked (GlcNAc...) asparagine" evidence="3">
    <location>
        <position position="827"/>
    </location>
</feature>
<feature type="glycosylation site" description="N-linked (GlcNAc...) asparagine" evidence="3">
    <location>
        <position position="941"/>
    </location>
</feature>
<feature type="glycosylation site" description="N-linked (GlcNAc...) asparagine" evidence="3">
    <location>
        <position position="1001"/>
    </location>
</feature>
<feature type="glycosylation site" description="N-linked (GlcNAc...) asparagine" evidence="3">
    <location>
        <position position="1018"/>
    </location>
</feature>
<feature type="glycosylation site" description="N-linked (GlcNAc...) asparagine" evidence="3">
    <location>
        <position position="1171"/>
    </location>
</feature>
<feature type="glycosylation site" description="N-linked (GlcNAc...) asparagine" evidence="3">
    <location>
        <position position="1282"/>
    </location>
</feature>
<feature type="glycosylation site" description="N-linked (GlcNAc...) asparagine" evidence="3">
    <location>
        <position position="1315"/>
    </location>
</feature>
<feature type="glycosylation site" description="N-linked (GlcNAc...) asparagine" evidence="3">
    <location>
        <position position="1473"/>
    </location>
</feature>
<feature type="glycosylation site" description="N-linked (GlcNAc...) asparagine" evidence="3">
    <location>
        <position position="1534"/>
    </location>
</feature>
<feature type="glycosylation site" description="N-linked (GlcNAc...) asparagine" evidence="3">
    <location>
        <position position="1651"/>
    </location>
</feature>
<feature type="glycosylation site" description="N-linked (GlcNAc...) asparagine" evidence="3">
    <location>
        <position position="1667"/>
    </location>
</feature>
<feature type="glycosylation site" description="N-linked (GlcNAc...) asparagine" evidence="3">
    <location>
        <position position="1818"/>
    </location>
</feature>
<feature type="glycosylation site" description="N-linked (GlcNAc...) asparagine" evidence="3">
    <location>
        <position position="1857"/>
    </location>
</feature>
<feature type="glycosylation site" description="N-linked (GlcNAc...) asparagine" evidence="3">
    <location>
        <position position="1889"/>
    </location>
</feature>
<feature type="glycosylation site" description="N-linked (GlcNAc...) asparagine" evidence="3">
    <location>
        <position position="1902"/>
    </location>
</feature>
<feature type="glycosylation site" description="N-linked (GlcNAc...) asparagine" evidence="3">
    <location>
        <position position="2014"/>
    </location>
</feature>
<feature type="glycosylation site" description="N-linked (GlcNAc...) asparagine" evidence="3">
    <location>
        <position position="2050"/>
    </location>
</feature>
<feature type="glycosylation site" description="N-linked (GlcNAc...) asparagine" evidence="3">
    <location>
        <position position="2129"/>
    </location>
</feature>
<feature type="glycosylation site" description="N-linked (GlcNAc...) asparagine" evidence="3">
    <location>
        <position position="2168"/>
    </location>
</feature>
<feature type="glycosylation site" description="N-linked (GlcNAc...) asparagine" evidence="3">
    <location>
        <position position="2195"/>
    </location>
</feature>
<feature type="glycosylation site" description="N-linked (GlcNAc...) asparagine" evidence="3">
    <location>
        <position position="2263"/>
    </location>
</feature>
<feature type="glycosylation site" description="N-linked (GlcNAc...) asparagine" evidence="3">
    <location>
        <position position="2357"/>
    </location>
</feature>
<feature type="glycosylation site" description="N-linked (GlcNAc...) asparagine" evidence="3">
    <location>
        <position position="2369"/>
    </location>
</feature>
<feature type="glycosylation site" description="N-linked (GlcNAc...) asparagine" evidence="3">
    <location>
        <position position="2578"/>
    </location>
</feature>
<feature type="glycosylation site" description="N-linked (GlcNAc...) asparagine" evidence="3">
    <location>
        <position position="2616"/>
    </location>
</feature>
<feature type="glycosylation site" description="N-linked (GlcNAc...) asparagine" evidence="3">
    <location>
        <position position="2749"/>
    </location>
</feature>
<feature type="glycosylation site" description="N-linked (GlcNAc...) asparagine" evidence="3">
    <location>
        <position position="2808"/>
    </location>
</feature>
<feature type="glycosylation site" description="N-linked (GlcNAc...) asparagine" evidence="3">
    <location>
        <position position="2877"/>
    </location>
</feature>
<feature type="glycosylation site" description="N-linked (GlcNAc...) asparagine" evidence="3">
    <location>
        <position position="2896"/>
    </location>
</feature>
<feature type="glycosylation site" description="N-linked (GlcNAc...) asparagine" evidence="3">
    <location>
        <position position="2941"/>
    </location>
</feature>
<feature type="glycosylation site" description="N-linked (GlcNAc...) asparagine" evidence="3">
    <location>
        <position position="2981"/>
    </location>
</feature>
<feature type="splice variant" id="VSP_059242" description="In isoform C1 and isoform C2.">
    <original>MRYSLVTCYAVLWLLMLVPGSWGQVNRLPFFTNHFFDTYLLISEDTPVGSSVTQLLARDMDNDPLVFGVSGEEASRFFAVEPDTGVVWLRQPLDRETKSEFTVEFSVSDHQGVITRKVNIQVGDVNDNAPTFHNQPYSVRIPENTPVGTPIFIVNATDPDLGAGGSVLYSFQPPSPFFAIDSARGIVTVIQELDYEVTQAYQLTVNATDQDKTRPLSTLANLAIIITDMQDMDPIFINLPYSTNIYEHSPPGTTVRVITAVDQDKGRPRGIGYTIVSGNTNSIFALDYISGALTLNGLLDRENPLYSHGFILTVKGTELNDDRTPSDATVTTTFNILVIDINDNAPEFNSSEYSVAITELAQVGFALPLFIQVVDKDEDLGLNSMFEVYLVGNNSHHFIISPTSVQGKADIRIRVAIPLDYETVDRYDFDLFANESVPDHVGYAKVKITLINENDNRPIFSQPLYNVSLYENITVGTSVLTVLATDNDVGTFGEVNYFFSDDPDRFSLDKDTGLIMLIARLDYELIQRFTLTVIARDGGGEETTGRVRINVLDVNDNVPTFQKDAYVGALRENEPSVTQLVRLRATDEDSPPNNLITYSIVNASAFGSYFDISIYEGYGVISVSRPLDYEQIPNGLIYLTVMAKDAGNPPLYSTVPVTIEVFDENDNPPTFSKPAYFVSVLENIMAGATVLFLNATDLDRSREYGQESIIYSLEGSSQFRINARSGEITTTSLLDRETKSEYILIVRAVDGGVGHNQKTGIATVNVTLLDINDNHPTWKDAPYYINLVEMTPPDSDVTTVVAVDPDLGENGTLVYSIHPPNKFYSLNSTTGKIRTTHVMLDRENPDPVEAELMRKIIVSVTDCGRPPLKATSSATVFVNLLDLNDNDPTFRNLPFVAEILEGTPAGVSVYQVVAIDLDEGLNGLVSYRMQVGMPRMDFVINSTSGVVTTTAELDRERIAEYQLRVVASDAGTPTKSSTSTLTVRVLDVNDETPTFFPAVYNVSVSEDVPREFRVVWLNCTDNDVGLNAELSYFITAGNVDGKFSVGYRDAVVRTVVGLDRETTAAYTLVLEAIDNGPVGKRRTGTATVFVTVLDVNDNRPIFLQSSYEASVPEDIPEGHSIVQLKATDADEGEFGRVWYRILHGNHGNNFRIHVGSGLLMRGPRPLDRERNSSHVLMVEAYNHDLGPMRSSVRVIVYVEDVNDEAPVFTQQQYNRLGLRETAGIGTSVIVVRATDKDTGDGGLVNYRILSGAEGKFEIDESTGLIVTVDYLDYETKTSYLMNVSATDGAPPFNQGFCSVYVTLLNELDEAVQFSNASYEAVIMENLALGTEIVRVQAYSIDNLNQITYRFDAYTSAQAKALFKIDAITGVITVKGLVDREKGDFYTLTVVADDGGPKVDSTVKVYITVLDENDNSPRFDFTSDSAISVPEDCPVGQRVATVKARDPDAGSNGQVVFSLASGNIAGAFEIITSNDSIGEVFVAKPLDREELDHYILKVVASDRGTPPRKKDHILQVTILDVNDNPPVIESPFGYNVSVNENVGGGTSVVQVRATDRDIGINSVLSYYITEGNEDMTFRMDRISGEIATRPAPPDRERQNFYHLVVTVEDEGTPTLSATTHVYVTIVDENDNAPVFQQPHYEVVLDEGPDTINTSLITVQALDLDEGPNGTVTYAIVAGNIINTFRINKHTGVITAAKELDYEISHGRYTLIVTATDQCPILSHRLTSTTTVLVNVNDINDNVPTFPRDYEGPFDVTEGQPGPRVWTFLAHDRDSGPNGQVEYSVVDGDPLGEFVISPVEGVLRVRKDVELDRETIAFYNLTICARDRGVPPLSSTMLVGIRVLDINDNDPVLLNLPMNVTISENSPVSSFVAHVLASDADSGCNALLTFNITAGNRERAFFINATTGIVTVNRPLDRERIPEYRLTVSVKDNPENPRIARKDFDLLLVSLADENDNHPLFTEGTYQAEVMENSPAGTPLTVLNGPILALDADEDVYAVVTYQLLGTHSDLFVIDNSTGVVTVRSGIIIDREAFSPPFLELLLLAEDIGQLNGTAHLFITILDDNDNWPTFSPPTYTVHLLENCPPGFSVLQVTATDEDSGLNGELVYRIEAGAQDRFLIHPVTGVIRVGNATIDREEQESYRLTVVATDRGTVPLSGTAIVTILIDDINDSRPEFLNPIQTVSVLESAEPGTIIANVTAIDLDLNPKLEYHIISIVAKDDTDRLVPDQEDAFAVNINTGSVMVKSPLNRELVATYEVTLSVIDNASDLPEHSVSVPNAKLTVNILDVNDNTPQFKPFGITYYTERVLEGATPGTTLIAVAAVDPDKGLNGLITYTLLDLTPPGYVQLEDSSAGKVIANRTVDYEEVHWLNFTVRASDNGSPPRAAEIPVYLEIVDINDNNPIFDQPSYQEAVFEDIAVGTVILRVTATDADSGNFALIEYSLVDGEGKFAINPNTGDISVLSSLDREKKDHYILTALAKDNPGDVASNRRENSVQVVIRVLDVNDCRPQFSKPQFSTSVYENEPAGTSVITMLATDQDEGSNSQLTYSLEGPGMEAFSVDMDSGLVTTQRPLQSYERFNLTVVATDGGEPPLWGTTMLLVEVIDVNDNRPVFVRPPNGTILHIKEEIPLRSNVYEVYATDNDEGLNGAVRYSFLKTTGNRDWEYFTIDPISGLIQTAQRLDREKQAVYSLILVASDLGQPVPYETMQPLQVALEDIDDNEPLFVRPPKGSPQYQLLTVPEHSPRGTLVGNVTGAVDADEGPNAIVYYFIAAGDEDKNFHLQPDGRLLVLRDLDRETEATFSFIVKASSNRSWTPPRGPSPALDLLTDLTLQEVRVVLEDINDQPPRFTKAEYTAGVATDAKVGSELIQVLALDADIGNNSLVFYGILAIHYFRALANDSEDVGQVFTMGSVDGILRTFDLFMAYSPGYFVVDIVARDLAGHNDTAIIGIYILRDDQRVKIVINEIPDRVRGFEEEFIRLLSNITGAIVNTDDVQFHVDMKGRVNFAQTELLIHVVNRDTNRILDVDRVIQMIDENKEQLRNLFRNYNVLDVQPAISVQLPDDMSALQMAIIVLAILLFLAAMLFVLMNWYYRTIHKRKLKAIVAGSAGNRGFIDIMDMPNTNKYSFDGS</original>
    <variation>MLLPNYRA</variation>
    <location>
        <begin position="1"/>
        <end position="3128"/>
    </location>
</feature>
<feature type="splice variant" id="VSP_059243" description="In isoform B2 and isoform B1.">
    <location>
        <begin position="1"/>
        <end position="2240"/>
    </location>
</feature>
<feature type="splice variant" id="VSP_000648" description="In isoform 2, isoform B2 and isoform C2." evidence="12">
    <location>
        <begin position="3212"/>
        <end position="3246"/>
    </location>
</feature>
<feature type="splice variant" id="VSP_059244" description="In isoform C1.">
    <original>L</original>
    <variation>EL</variation>
    <location>
        <position position="3247"/>
    </location>
</feature>
<feature type="sequence variant" description="In strain: CAST/Ei." evidence="6">
    <original>L</original>
    <variation>P</variation>
    <location>
        <position position="5"/>
    </location>
</feature>
<feature type="sequence variant" description="In strain: CAST/Ei." evidence="6">
    <original>M</original>
    <variation>V</variation>
    <location>
        <position position="229"/>
    </location>
</feature>
<feature type="sequence variant" description="In strain: CAST/Ei." evidence="6">
    <original>R</original>
    <variation>K</variation>
    <location>
        <position position="891"/>
    </location>
</feature>
<feature type="sequence variant" description="In strain: CAST/Ei." evidence="6">
    <original>V</original>
    <variation>I</variation>
    <location>
        <position position="1137"/>
    </location>
</feature>
<feature type="sequence variant" description="In strain: CAST/Ei." evidence="6">
    <original>K</original>
    <variation>R</variation>
    <location>
        <position position="1236"/>
    </location>
</feature>
<feature type="sequence variant" description="In strain: CAST/Ei." evidence="6">
    <original>I</original>
    <variation>V</variation>
    <location>
        <position position="2025"/>
    </location>
</feature>
<feature type="sequence variant" description="In strain: CAST/Ei." evidence="6">
    <original>I</original>
    <variation>V</variation>
    <location>
        <position position="2026"/>
    </location>
</feature>
<feature type="sequence variant" description="In strain: CAST/Ei." evidence="6">
    <original>K</original>
    <variation>T</variation>
    <location>
        <position position="2217"/>
    </location>
</feature>
<feature type="sequence variant" description="In strain: CAST/Ei." evidence="6">
    <original>R</original>
    <variation>H</variation>
    <location>
        <position position="2222"/>
    </location>
</feature>
<feature type="sequence variant" description="In strain: CAST/Ei." evidence="6">
    <original>H</original>
    <variation>R</variation>
    <location>
        <position position="2270"/>
    </location>
</feature>
<feature type="sequence variant" description="In strain: CAST/Ei." evidence="6">
    <original>G</original>
    <variation>A</variation>
    <location>
        <position position="2617"/>
    </location>
</feature>
<feature type="sequence variant" description="In waltzer." evidence="6">
    <location>
        <begin position="2718"/>
        <end position="2720"/>
    </location>
</feature>
<feature type="mutagenesis site" description="Strongly reduced affinity for PCDH15." evidence="9">
    <original>N</original>
    <variation>I</variation>
    <location>
        <position position="26"/>
    </location>
</feature>
<feature type="mutagenesis site" description="Strongly reduced affinity for PCDH15." evidence="9">
    <original>R</original>
    <variation>I</variation>
    <location>
        <position position="27"/>
    </location>
</feature>
<feature type="mutagenesis site" description="Strongly reduced interaction with PCDH15." evidence="10">
    <original>L</original>
    <variation>G</variation>
    <location>
        <position position="168"/>
    </location>
</feature>
<feature type="sequence conflict" description="In Ref. 2; AAK07670." evidence="13" ref="2">
    <original>D</original>
    <variation>G</variation>
    <location>
        <position position="94"/>
    </location>
</feature>
<feature type="sequence conflict" description="In Ref. 2; AAK07670." evidence="13" ref="2">
    <original>PE</original>
    <variation>TQ</variation>
    <location>
        <begin position="142"/>
        <end position="143"/>
    </location>
</feature>
<feature type="sequence conflict" description="In Ref. 2; AAK07670." evidence="13" ref="2">
    <original>HSPP</original>
    <variation>QLTVNAT</variation>
    <location>
        <begin position="248"/>
        <end position="251"/>
    </location>
</feature>
<feature type="sequence conflict" description="In Ref. 1; AAG52817 and 2; AAK07670." evidence="13" ref="1 2">
    <original>D</original>
    <variation>N</variation>
    <location>
        <position position="379"/>
    </location>
</feature>
<feature type="sequence conflict" description="In Ref. 1; AAG52817, 2; AAK07670 and 3; AAT72163/AAT72164." evidence="13" ref="1 2 3">
    <original>S</original>
    <variation>A</variation>
    <location>
        <position position="3128"/>
    </location>
</feature>
<feature type="sequence conflict" description="In Ref. 1; AAG52817." evidence="13" ref="1">
    <original>G</original>
    <variation>S</variation>
    <location>
        <position position="3262"/>
    </location>
</feature>
<feature type="helix" evidence="14">
    <location>
        <begin position="34"/>
        <end position="36"/>
    </location>
</feature>
<feature type="strand" evidence="14">
    <location>
        <begin position="40"/>
        <end position="43"/>
    </location>
</feature>
<feature type="strand" evidence="14">
    <location>
        <begin position="51"/>
        <end position="54"/>
    </location>
</feature>
<feature type="strand" evidence="14">
    <location>
        <begin position="66"/>
        <end position="71"/>
    </location>
</feature>
<feature type="helix" evidence="14">
    <location>
        <begin position="72"/>
        <end position="77"/>
    </location>
</feature>
<feature type="strand" evidence="14">
    <location>
        <begin position="78"/>
        <end position="80"/>
    </location>
</feature>
<feature type="turn" evidence="14">
    <location>
        <begin position="82"/>
        <end position="84"/>
    </location>
</feature>
<feature type="strand" evidence="14">
    <location>
        <begin position="86"/>
        <end position="91"/>
    </location>
</feature>
<feature type="turn" evidence="14">
    <location>
        <begin position="95"/>
        <end position="97"/>
    </location>
</feature>
<feature type="strand" evidence="14">
    <location>
        <begin position="100"/>
        <end position="108"/>
    </location>
</feature>
<feature type="strand" evidence="14">
    <location>
        <begin position="113"/>
        <end position="123"/>
    </location>
</feature>
<feature type="strand" evidence="15">
    <location>
        <begin position="131"/>
        <end position="134"/>
    </location>
</feature>
<feature type="strand" evidence="14">
    <location>
        <begin position="136"/>
        <end position="142"/>
    </location>
</feature>
<feature type="strand" evidence="14">
    <location>
        <begin position="150"/>
        <end position="153"/>
    </location>
</feature>
<feature type="helix" evidence="14">
    <location>
        <begin position="162"/>
        <end position="165"/>
    </location>
</feature>
<feature type="strand" evidence="14">
    <location>
        <begin position="167"/>
        <end position="173"/>
    </location>
</feature>
<feature type="strand" evidence="14">
    <location>
        <begin position="176"/>
        <end position="180"/>
    </location>
</feature>
<feature type="turn" evidence="14">
    <location>
        <begin position="182"/>
        <end position="184"/>
    </location>
</feature>
<feature type="strand" evidence="14">
    <location>
        <begin position="186"/>
        <end position="189"/>
    </location>
</feature>
<feature type="turn" evidence="14">
    <location>
        <begin position="195"/>
        <end position="197"/>
    </location>
</feature>
<feature type="strand" evidence="14">
    <location>
        <begin position="199"/>
        <end position="209"/>
    </location>
</feature>
<feature type="strand" evidence="14">
    <location>
        <begin position="212"/>
        <end position="214"/>
    </location>
</feature>
<feature type="strand" evidence="14">
    <location>
        <begin position="217"/>
        <end position="227"/>
    </location>
</feature>
<feature type="strand" evidence="24">
    <location>
        <begin position="777"/>
        <end position="780"/>
    </location>
</feature>
<feature type="strand" evidence="24">
    <location>
        <begin position="782"/>
        <end position="788"/>
    </location>
</feature>
<feature type="strand" evidence="24">
    <location>
        <begin position="796"/>
        <end position="799"/>
    </location>
</feature>
<feature type="helix" evidence="24">
    <location>
        <begin position="808"/>
        <end position="811"/>
    </location>
</feature>
<feature type="strand" evidence="24">
    <location>
        <begin position="813"/>
        <end position="819"/>
    </location>
</feature>
<feature type="strand" evidence="24">
    <location>
        <begin position="824"/>
        <end position="826"/>
    </location>
</feature>
<feature type="turn" evidence="24">
    <location>
        <begin position="828"/>
        <end position="830"/>
    </location>
</feature>
<feature type="strand" evidence="24">
    <location>
        <begin position="832"/>
        <end position="835"/>
    </location>
</feature>
<feature type="helix" evidence="24">
    <location>
        <begin position="847"/>
        <end position="854"/>
    </location>
</feature>
<feature type="strand" evidence="24">
    <location>
        <begin position="855"/>
        <end position="862"/>
    </location>
</feature>
<feature type="strand" evidence="24">
    <location>
        <begin position="874"/>
        <end position="881"/>
    </location>
</feature>
<feature type="strand" evidence="24">
    <location>
        <begin position="889"/>
        <end position="892"/>
    </location>
</feature>
<feature type="strand" evidence="24">
    <location>
        <begin position="894"/>
        <end position="898"/>
    </location>
</feature>
<feature type="strand" evidence="24">
    <location>
        <begin position="908"/>
        <end position="911"/>
    </location>
</feature>
<feature type="helix" evidence="24">
    <location>
        <begin position="920"/>
        <end position="923"/>
    </location>
</feature>
<feature type="strand" evidence="24">
    <location>
        <begin position="926"/>
        <end position="928"/>
    </location>
</feature>
<feature type="strand" evidence="24">
    <location>
        <begin position="938"/>
        <end position="940"/>
    </location>
</feature>
<feature type="turn" evidence="24">
    <location>
        <begin position="942"/>
        <end position="944"/>
    </location>
</feature>
<feature type="strand" evidence="24">
    <location>
        <begin position="946"/>
        <end position="951"/>
    </location>
</feature>
<feature type="turn" evidence="24">
    <location>
        <begin position="955"/>
        <end position="957"/>
    </location>
</feature>
<feature type="strand" evidence="24">
    <location>
        <begin position="959"/>
        <end position="968"/>
    </location>
</feature>
<feature type="strand" evidence="24">
    <location>
        <begin position="976"/>
        <end position="984"/>
    </location>
</feature>
<feature type="strand" evidence="20">
    <location>
        <begin position="1207"/>
        <end position="1209"/>
    </location>
</feature>
<feature type="strand" evidence="20">
    <location>
        <begin position="1211"/>
        <end position="1219"/>
    </location>
</feature>
<feature type="strand" evidence="20">
    <location>
        <begin position="1227"/>
        <end position="1230"/>
    </location>
</feature>
<feature type="helix" evidence="20">
    <location>
        <begin position="1239"/>
        <end position="1242"/>
    </location>
</feature>
<feature type="strand" evidence="20">
    <location>
        <begin position="1244"/>
        <end position="1250"/>
    </location>
</feature>
<feature type="strand" evidence="20">
    <location>
        <begin position="1255"/>
        <end position="1258"/>
    </location>
</feature>
<feature type="turn" evidence="20">
    <location>
        <begin position="1260"/>
        <end position="1262"/>
    </location>
</feature>
<feature type="strand" evidence="20">
    <location>
        <begin position="1264"/>
        <end position="1267"/>
    </location>
</feature>
<feature type="turn" evidence="20">
    <location>
        <begin position="1273"/>
        <end position="1275"/>
    </location>
</feature>
<feature type="strand" evidence="20">
    <location>
        <begin position="1277"/>
        <end position="1289"/>
    </location>
</feature>
<feature type="strand" evidence="20">
    <location>
        <begin position="1294"/>
        <end position="1304"/>
    </location>
</feature>
<feature type="strand" evidence="20">
    <location>
        <begin position="1311"/>
        <end position="1316"/>
    </location>
</feature>
<feature type="strand" evidence="20">
    <location>
        <begin position="1318"/>
        <end position="1323"/>
    </location>
</feature>
<feature type="strand" evidence="20">
    <location>
        <begin position="1331"/>
        <end position="1334"/>
    </location>
</feature>
<feature type="strand" evidence="20">
    <location>
        <begin position="1337"/>
        <end position="1339"/>
    </location>
</feature>
<feature type="strand" evidence="20">
    <location>
        <begin position="1347"/>
        <end position="1350"/>
    </location>
</feature>
<feature type="helix" evidence="20">
    <location>
        <begin position="1356"/>
        <end position="1361"/>
    </location>
</feature>
<feature type="strand" evidence="20">
    <location>
        <begin position="1362"/>
        <end position="1364"/>
    </location>
</feature>
<feature type="turn" evidence="20">
    <location>
        <begin position="1366"/>
        <end position="1368"/>
    </location>
</feature>
<feature type="strand" evidence="20">
    <location>
        <begin position="1370"/>
        <end position="1373"/>
    </location>
</feature>
<feature type="helix" evidence="20">
    <location>
        <begin position="1379"/>
        <end position="1381"/>
    </location>
</feature>
<feature type="strand" evidence="20">
    <location>
        <begin position="1383"/>
        <end position="1392"/>
    </location>
</feature>
<feature type="strand" evidence="20">
    <location>
        <begin position="1394"/>
        <end position="1398"/>
    </location>
</feature>
<feature type="strand" evidence="20">
    <location>
        <begin position="1400"/>
        <end position="1409"/>
    </location>
</feature>
<feature type="strand" evidence="22">
    <location>
        <begin position="1633"/>
        <end position="1644"/>
    </location>
</feature>
<feature type="helix" evidence="22">
    <location>
        <begin position="1647"/>
        <end position="1649"/>
    </location>
</feature>
<feature type="strand" evidence="22">
    <location>
        <begin position="1653"/>
        <end position="1656"/>
    </location>
</feature>
<feature type="strand" evidence="22">
    <location>
        <begin position="1671"/>
        <end position="1676"/>
    </location>
</feature>
<feature type="helix" evidence="22">
    <location>
        <begin position="1679"/>
        <end position="1681"/>
    </location>
</feature>
<feature type="strand" evidence="22">
    <location>
        <begin position="1683"/>
        <end position="1685"/>
    </location>
</feature>
<feature type="turn" evidence="22">
    <location>
        <begin position="1687"/>
        <end position="1689"/>
    </location>
</feature>
<feature type="strand" evidence="22">
    <location>
        <begin position="1691"/>
        <end position="1696"/>
    </location>
</feature>
<feature type="helix" evidence="22">
    <location>
        <begin position="1700"/>
        <end position="1703"/>
    </location>
</feature>
<feature type="strand" evidence="22">
    <location>
        <begin position="1706"/>
        <end position="1714"/>
    </location>
</feature>
<feature type="helix" evidence="22">
    <location>
        <begin position="1720"/>
        <end position="1722"/>
    </location>
</feature>
<feature type="strand" evidence="22">
    <location>
        <begin position="1725"/>
        <end position="1735"/>
    </location>
</feature>
<feature type="strand" evidence="22">
    <location>
        <begin position="1747"/>
        <end position="1760"/>
    </location>
</feature>
<feature type="strand" evidence="22">
    <location>
        <begin position="1762"/>
        <end position="1765"/>
    </location>
</feature>
<feature type="helix" evidence="22">
    <location>
        <begin position="1774"/>
        <end position="1777"/>
    </location>
</feature>
<feature type="strand" evidence="22">
    <location>
        <begin position="1779"/>
        <end position="1786"/>
    </location>
</feature>
<feature type="strand" evidence="22">
    <location>
        <begin position="1792"/>
        <end position="1794"/>
    </location>
</feature>
<feature type="turn" evidence="22">
    <location>
        <begin position="1796"/>
        <end position="1798"/>
    </location>
</feature>
<feature type="strand" evidence="22">
    <location>
        <begin position="1800"/>
        <end position="1803"/>
    </location>
</feature>
<feature type="turn" evidence="22">
    <location>
        <begin position="1811"/>
        <end position="1813"/>
    </location>
</feature>
<feature type="strand" evidence="22">
    <location>
        <begin position="1815"/>
        <end position="1829"/>
    </location>
</feature>
<feature type="strand" evidence="22">
    <location>
        <begin position="1832"/>
        <end position="1842"/>
    </location>
</feature>
<feature type="strand" evidence="25">
    <location>
        <begin position="1850"/>
        <end position="1853"/>
    </location>
</feature>
<feature type="strand" evidence="25">
    <location>
        <begin position="1855"/>
        <end position="1861"/>
    </location>
</feature>
<feature type="strand" evidence="25">
    <location>
        <begin position="1869"/>
        <end position="1872"/>
    </location>
</feature>
<feature type="strand" evidence="25">
    <location>
        <begin position="1879"/>
        <end position="1881"/>
    </location>
</feature>
<feature type="strand" evidence="25">
    <location>
        <begin position="1886"/>
        <end position="1892"/>
    </location>
</feature>
<feature type="helix" evidence="25">
    <location>
        <begin position="1895"/>
        <end position="1897"/>
    </location>
</feature>
<feature type="strand" evidence="25">
    <location>
        <begin position="1899"/>
        <end position="1901"/>
    </location>
</feature>
<feature type="turn" evidence="25">
    <location>
        <begin position="1903"/>
        <end position="1905"/>
    </location>
</feature>
<feature type="strand" evidence="25">
    <location>
        <begin position="1907"/>
        <end position="1910"/>
    </location>
</feature>
<feature type="turn" evidence="25">
    <location>
        <begin position="1916"/>
        <end position="1918"/>
    </location>
</feature>
<feature type="strand" evidence="25">
    <location>
        <begin position="1921"/>
        <end position="1930"/>
    </location>
</feature>
<feature type="helix" evidence="21">
    <location>
        <begin position="1935"/>
        <end position="1937"/>
    </location>
</feature>
<feature type="strand" evidence="25">
    <location>
        <begin position="1940"/>
        <end position="1950"/>
    </location>
</feature>
<feature type="strand" evidence="25">
    <location>
        <begin position="1958"/>
        <end position="1960"/>
    </location>
</feature>
<feature type="strand" evidence="25">
    <location>
        <begin position="1962"/>
        <end position="1969"/>
    </location>
</feature>
<feature type="strand" evidence="25">
    <location>
        <begin position="1979"/>
        <end position="1983"/>
    </location>
</feature>
<feature type="strand" evidence="25">
    <location>
        <begin position="1991"/>
        <end position="1993"/>
    </location>
</feature>
<feature type="helix" evidence="25">
    <location>
        <begin position="1994"/>
        <end position="1996"/>
    </location>
</feature>
<feature type="strand" evidence="25">
    <location>
        <begin position="1999"/>
        <end position="2004"/>
    </location>
</feature>
<feature type="helix" evidence="25">
    <location>
        <begin position="2007"/>
        <end position="2009"/>
    </location>
</feature>
<feature type="strand" evidence="25">
    <location>
        <begin position="2010"/>
        <end position="2012"/>
    </location>
</feature>
<feature type="turn" evidence="25">
    <location>
        <begin position="2014"/>
        <end position="2016"/>
    </location>
</feature>
<feature type="strand" evidence="25">
    <location>
        <begin position="2019"/>
        <end position="2021"/>
    </location>
</feature>
<feature type="helix" evidence="25">
    <location>
        <begin position="2029"/>
        <end position="2031"/>
    </location>
</feature>
<feature type="strand" evidence="25">
    <location>
        <begin position="2033"/>
        <end position="2044"/>
    </location>
</feature>
<feature type="strand" evidence="25">
    <location>
        <begin position="2050"/>
        <end position="2060"/>
    </location>
</feature>
<feature type="strand" evidence="16">
    <location>
        <begin position="2068"/>
        <end position="2081"/>
    </location>
</feature>
<feature type="strand" evidence="16">
    <location>
        <begin position="2087"/>
        <end position="2090"/>
    </location>
</feature>
<feature type="helix" evidence="16">
    <location>
        <begin position="2099"/>
        <end position="2101"/>
    </location>
</feature>
<feature type="strand" evidence="16">
    <location>
        <begin position="2105"/>
        <end position="2111"/>
    </location>
</feature>
<feature type="strand" evidence="16">
    <location>
        <begin position="2115"/>
        <end position="2118"/>
    </location>
</feature>
<feature type="turn" evidence="16">
    <location>
        <begin position="2120"/>
        <end position="2122"/>
    </location>
</feature>
<feature type="strand" evidence="16">
    <location>
        <begin position="2124"/>
        <end position="2127"/>
    </location>
</feature>
<feature type="turn" evidence="16">
    <location>
        <begin position="2134"/>
        <end position="2136"/>
    </location>
</feature>
<feature type="strand" evidence="16">
    <location>
        <begin position="2138"/>
        <end position="2147"/>
    </location>
</feature>
<feature type="strand" evidence="16">
    <location>
        <begin position="2150"/>
        <end position="2152"/>
    </location>
</feature>
<feature type="strand" evidence="16">
    <location>
        <begin position="2155"/>
        <end position="2165"/>
    </location>
</feature>
<feature type="strand" evidence="16">
    <location>
        <begin position="2173"/>
        <end position="2176"/>
    </location>
</feature>
<feature type="strand" evidence="16">
    <location>
        <begin position="2178"/>
        <end position="2184"/>
    </location>
</feature>
<feature type="strand" evidence="16">
    <location>
        <begin position="2192"/>
        <end position="2195"/>
    </location>
</feature>
<feature type="strand" evidence="16">
    <location>
        <begin position="2202"/>
        <end position="2204"/>
    </location>
</feature>
<feature type="strand" evidence="16">
    <location>
        <begin position="2207"/>
        <end position="2217"/>
    </location>
</feature>
<feature type="turn" evidence="18">
    <location>
        <begin position="2219"/>
        <end position="2221"/>
    </location>
</feature>
<feature type="strand" evidence="17">
    <location>
        <begin position="2223"/>
        <end position="2225"/>
    </location>
</feature>
<feature type="strand" evidence="16">
    <location>
        <begin position="2230"/>
        <end position="2233"/>
    </location>
</feature>
<feature type="turn" evidence="16">
    <location>
        <begin position="2235"/>
        <end position="2237"/>
    </location>
</feature>
<feature type="strand" evidence="16">
    <location>
        <begin position="2239"/>
        <end position="2242"/>
    </location>
</feature>
<feature type="turn" evidence="16">
    <location>
        <begin position="2248"/>
        <end position="2250"/>
    </location>
</feature>
<feature type="strand" evidence="16">
    <location>
        <begin position="2252"/>
        <end position="2262"/>
    </location>
</feature>
<feature type="helix" evidence="16">
    <location>
        <begin position="2268"/>
        <end position="2270"/>
    </location>
</feature>
<feature type="strand" evidence="16">
    <location>
        <begin position="2277"/>
        <end position="2284"/>
    </location>
</feature>
<feature type="strand" evidence="19">
    <location>
        <begin position="2292"/>
        <end position="2295"/>
    </location>
</feature>
<feature type="strand" evidence="19">
    <location>
        <begin position="2301"/>
        <end position="2306"/>
    </location>
</feature>
<feature type="strand" evidence="19">
    <location>
        <begin position="2314"/>
        <end position="2318"/>
    </location>
</feature>
<feature type="helix" evidence="19">
    <location>
        <begin position="2326"/>
        <end position="2329"/>
    </location>
</feature>
<feature type="strand" evidence="19">
    <location>
        <begin position="2332"/>
        <end position="2347"/>
    </location>
</feature>
<feature type="strand" evidence="19">
    <location>
        <begin position="2351"/>
        <end position="2358"/>
    </location>
</feature>
<feature type="turn" evidence="19">
    <location>
        <begin position="2362"/>
        <end position="2364"/>
    </location>
</feature>
<feature type="strand" evidence="19">
    <location>
        <begin position="2366"/>
        <end position="2375"/>
    </location>
</feature>
<feature type="strand" evidence="19">
    <location>
        <begin position="2378"/>
        <end position="2380"/>
    </location>
</feature>
<feature type="strand" evidence="19">
    <location>
        <begin position="2383"/>
        <end position="2393"/>
    </location>
</feature>
<feature type="strand" evidence="19">
    <location>
        <begin position="2401"/>
        <end position="2405"/>
    </location>
</feature>
<feature type="strand" evidence="19">
    <location>
        <begin position="2407"/>
        <end position="2412"/>
    </location>
</feature>
<feature type="strand" evidence="19">
    <location>
        <begin position="2420"/>
        <end position="2423"/>
    </location>
</feature>
<feature type="helix" evidence="19">
    <location>
        <begin position="2432"/>
        <end position="2435"/>
    </location>
</feature>
<feature type="strand" evidence="19">
    <location>
        <begin position="2437"/>
        <end position="2442"/>
    </location>
</feature>
<feature type="turn" evidence="19">
    <location>
        <begin position="2445"/>
        <end position="2447"/>
    </location>
</feature>
<feature type="strand" evidence="19">
    <location>
        <begin position="2448"/>
        <end position="2450"/>
    </location>
</feature>
<feature type="turn" evidence="19">
    <location>
        <begin position="2452"/>
        <end position="2454"/>
    </location>
</feature>
<feature type="strand" evidence="19">
    <location>
        <begin position="2456"/>
        <end position="2459"/>
    </location>
</feature>
<feature type="turn" evidence="19">
    <location>
        <begin position="2465"/>
        <end position="2467"/>
    </location>
</feature>
<feature type="strand" evidence="19">
    <location>
        <begin position="2469"/>
        <end position="2480"/>
    </location>
</feature>
<feature type="helix" evidence="19">
    <location>
        <begin position="2485"/>
        <end position="2487"/>
    </location>
</feature>
<feature type="strand" evidence="19">
    <location>
        <begin position="2490"/>
        <end position="2500"/>
    </location>
</feature>
<feature type="strand" evidence="19">
    <location>
        <begin position="2510"/>
        <end position="2519"/>
    </location>
</feature>
<feature type="strand" evidence="19">
    <location>
        <begin position="2527"/>
        <end position="2530"/>
    </location>
</feature>
<feature type="helix" evidence="19">
    <location>
        <begin position="2539"/>
        <end position="2542"/>
    </location>
</feature>
<feature type="strand" evidence="19">
    <location>
        <begin position="2545"/>
        <end position="2550"/>
    </location>
</feature>
<feature type="helix" evidence="19">
    <location>
        <begin position="2553"/>
        <end position="2555"/>
    </location>
</feature>
<feature type="strand" evidence="19">
    <location>
        <begin position="2556"/>
        <end position="2558"/>
    </location>
</feature>
<feature type="turn" evidence="19">
    <location>
        <begin position="2560"/>
        <end position="2562"/>
    </location>
</feature>
<feature type="strand" evidence="19">
    <location>
        <begin position="2564"/>
        <end position="2569"/>
    </location>
</feature>
<feature type="strand" evidence="19">
    <location>
        <begin position="2576"/>
        <end position="2584"/>
    </location>
</feature>
<feature type="strand" evidence="19">
    <location>
        <begin position="2586"/>
        <end position="2589"/>
    </location>
</feature>
<feature type="strand" evidence="19">
    <location>
        <begin position="2592"/>
        <end position="2602"/>
    </location>
</feature>
<feature type="strand" evidence="23">
    <location>
        <begin position="2610"/>
        <end position="2614"/>
    </location>
</feature>
<feature type="strand" evidence="23">
    <location>
        <begin position="2619"/>
        <end position="2623"/>
    </location>
</feature>
<feature type="strand" evidence="23">
    <location>
        <begin position="2631"/>
        <end position="2634"/>
    </location>
</feature>
<feature type="strand" evidence="23">
    <location>
        <begin position="2636"/>
        <end position="2638"/>
    </location>
</feature>
<feature type="helix" evidence="23">
    <location>
        <begin position="2643"/>
        <end position="2646"/>
    </location>
</feature>
<feature type="strand" evidence="23">
    <location>
        <begin position="2649"/>
        <end position="2652"/>
    </location>
</feature>
<feature type="strand" evidence="23">
    <location>
        <begin position="2655"/>
        <end position="2657"/>
    </location>
</feature>
<feature type="helix" evidence="23">
    <location>
        <begin position="2660"/>
        <end position="2663"/>
    </location>
</feature>
<feature type="strand" evidence="23">
    <location>
        <begin position="2664"/>
        <end position="2666"/>
    </location>
</feature>
<feature type="turn" evidence="23">
    <location>
        <begin position="2668"/>
        <end position="2670"/>
    </location>
</feature>
<feature type="strand" evidence="23">
    <location>
        <begin position="2672"/>
        <end position="2675"/>
    </location>
</feature>
<feature type="turn" evidence="23">
    <location>
        <begin position="2681"/>
        <end position="2683"/>
    </location>
</feature>
<feature type="strand" evidence="23">
    <location>
        <begin position="2685"/>
        <end position="2694"/>
    </location>
</feature>
<feature type="strand" evidence="23">
    <location>
        <begin position="2698"/>
        <end position="2700"/>
    </location>
</feature>
<feature type="strand" evidence="23">
    <location>
        <begin position="2703"/>
        <end position="2713"/>
    </location>
</feature>
<feature type="strand" evidence="23">
    <location>
        <begin position="2731"/>
        <end position="2738"/>
    </location>
</feature>
<feature type="strand" evidence="23">
    <location>
        <begin position="2746"/>
        <end position="2749"/>
    </location>
</feature>
<feature type="helix" evidence="23">
    <location>
        <begin position="2759"/>
        <end position="2761"/>
    </location>
</feature>
<feature type="strand" evidence="23">
    <location>
        <begin position="2765"/>
        <end position="2771"/>
    </location>
</feature>
<feature type="strand" evidence="23">
    <location>
        <begin position="2777"/>
        <end position="2779"/>
    </location>
</feature>
<feature type="strand" evidence="23">
    <location>
        <begin position="2783"/>
        <end position="2787"/>
    </location>
</feature>
<feature type="turn" evidence="23">
    <location>
        <begin position="2793"/>
        <end position="2795"/>
    </location>
</feature>
<feature type="strand" evidence="23">
    <location>
        <begin position="2798"/>
        <end position="2807"/>
    </location>
</feature>
<feature type="turn" evidence="23">
    <location>
        <begin position="2823"/>
        <end position="2825"/>
    </location>
</feature>
<feature type="strand" evidence="23">
    <location>
        <begin position="2829"/>
        <end position="2837"/>
    </location>
</feature>
<organism>
    <name type="scientific">Mus musculus</name>
    <name type="common">Mouse</name>
    <dbReference type="NCBI Taxonomy" id="10090"/>
    <lineage>
        <taxon>Eukaryota</taxon>
        <taxon>Metazoa</taxon>
        <taxon>Chordata</taxon>
        <taxon>Craniata</taxon>
        <taxon>Vertebrata</taxon>
        <taxon>Euteleostomi</taxon>
        <taxon>Mammalia</taxon>
        <taxon>Eutheria</taxon>
        <taxon>Euarchontoglires</taxon>
        <taxon>Glires</taxon>
        <taxon>Rodentia</taxon>
        <taxon>Myomorpha</taxon>
        <taxon>Muroidea</taxon>
        <taxon>Muridae</taxon>
        <taxon>Murinae</taxon>
        <taxon>Mus</taxon>
        <taxon>Mus</taxon>
    </lineage>
</organism>
<name>CAD23_MOUSE</name>
<sequence length="3354" mass="369623">MRYSLVTCYAVLWLLMLVPGSWGQVNRLPFFTNHFFDTYLLISEDTPVGSSVTQLLARDMDNDPLVFGVSGEEASRFFAVEPDTGVVWLRQPLDRETKSEFTVEFSVSDHQGVITRKVNIQVGDVNDNAPTFHNQPYSVRIPENTPVGTPIFIVNATDPDLGAGGSVLYSFQPPSPFFAIDSARGIVTVIQELDYEVTQAYQLTVNATDQDKTRPLSTLANLAIIITDMQDMDPIFINLPYSTNIYEHSPPGTTVRVITAVDQDKGRPRGIGYTIVSGNTNSIFALDYISGALTLNGLLDRENPLYSHGFILTVKGTELNDDRTPSDATVTTTFNILVIDINDNAPEFNSSEYSVAITELAQVGFALPLFIQVVDKDEDLGLNSMFEVYLVGNNSHHFIISPTSVQGKADIRIRVAIPLDYETVDRYDFDLFANESVPDHVGYAKVKITLINENDNRPIFSQPLYNVSLYENITVGTSVLTVLATDNDVGTFGEVNYFFSDDPDRFSLDKDTGLIMLIARLDYELIQRFTLTVIARDGGGEETTGRVRINVLDVNDNVPTFQKDAYVGALRENEPSVTQLVRLRATDEDSPPNNLITYSIVNASAFGSYFDISIYEGYGVISVSRPLDYEQIPNGLIYLTVMAKDAGNPPLYSTVPVTIEVFDENDNPPTFSKPAYFVSVLENIMAGATVLFLNATDLDRSREYGQESIIYSLEGSSQFRINARSGEITTTSLLDRETKSEYILIVRAVDGGVGHNQKTGIATVNVTLLDINDNHPTWKDAPYYINLVEMTPPDSDVTTVVAVDPDLGENGTLVYSIHPPNKFYSLNSTTGKIRTTHVMLDRENPDPVEAELMRKIIVSVTDCGRPPLKATSSATVFVNLLDLNDNDPTFRNLPFVAEILEGTPAGVSVYQVVAIDLDEGLNGLVSYRMQVGMPRMDFVINSTSGVVTTTAELDRERIAEYQLRVVASDAGTPTKSSTSTLTVRVLDVNDETPTFFPAVYNVSVSEDVPREFRVVWLNCTDNDVGLNAELSYFITAGNVDGKFSVGYRDAVVRTVVGLDRETTAAYTLVLEAIDNGPVGKRRTGTATVFVTVLDVNDNRPIFLQSSYEASVPEDIPEGHSIVQLKATDADEGEFGRVWYRILHGNHGNNFRIHVGSGLLMRGPRPLDRERNSSHVLMVEAYNHDLGPMRSSVRVIVYVEDVNDEAPVFTQQQYNRLGLRETAGIGTSVIVVRATDKDTGDGGLVNYRILSGAEGKFEIDESTGLIVTVDYLDYETKTSYLMNVSATDGAPPFNQGFCSVYVTLLNELDEAVQFSNASYEAVIMENLALGTEIVRVQAYSIDNLNQITYRFDAYTSAQAKALFKIDAITGVITVKGLVDREKGDFYTLTVVADDGGPKVDSTVKVYITVLDENDNSPRFDFTSDSAISVPEDCPVGQRVATVKARDPDAGSNGQVVFSLASGNIAGAFEIITSNDSIGEVFVAKPLDREELDHYILKVVASDRGTPPRKKDHILQVTILDVNDNPPVIESPFGYNVSVNENVGGGTSVVQVRATDRDIGINSVLSYYITEGNEDMTFRMDRISGEIATRPAPPDRERQNFYHLVVTVEDEGTPTLSATTHVYVTIVDENDNAPVFQQPHYEVVLDEGPDTINTSLITVQALDLDEGPNGTVTYAIVAGNIINTFRINKHTGVITAAKELDYEISHGRYTLIVTATDQCPILSHRLTSTTTVLVNVNDINDNVPTFPRDYEGPFDVTEGQPGPRVWTFLAHDRDSGPNGQVEYSVVDGDPLGEFVISPVEGVLRVRKDVELDRETIAFYNLTICARDRGVPPLSSTMLVGIRVLDINDNDPVLLNLPMNVTISENSPVSSFVAHVLASDADSGCNALLTFNITAGNRERAFFINATTGIVTVNRPLDRERIPEYRLTVSVKDNPENPRIARKDFDLLLVSLADENDNHPLFTEGTYQAEVMENSPAGTPLTVLNGPILALDADEDVYAVVTYQLLGTHSDLFVIDNSTGVVTVRSGIIIDREAFSPPFLELLLLAEDIGQLNGTAHLFITILDDNDNWPTFSPPTYTVHLLENCPPGFSVLQVTATDEDSGLNGELVYRIEAGAQDRFLIHPVTGVIRVGNATIDREEQESYRLTVVATDRGTVPLSGTAIVTILIDDINDSRPEFLNPIQTVSVLESAEPGTIIANVTAIDLDLNPKLEYHIISIVAKDDTDRLVPDQEDAFAVNINTGSVMVKSPLNRELVATYEVTLSVIDNASDLPEHSVSVPNAKLTVNILDVNDNTPQFKPFGITYYTERVLEGATPGTTLIAVAAVDPDKGLNGLITYTLLDLTPPGYVQLEDSSAGKVIANRTVDYEEVHWLNFTVRASDNGSPPRAAEIPVYLEIVDINDNNPIFDQPSYQEAVFEDIAVGTVILRVTATDADSGNFALIEYSLVDGEGKFAINPNTGDISVLSSLDREKKDHYILTALAKDNPGDVASNRRENSVQVVIRVLDVNDCRPQFSKPQFSTSVYENEPAGTSVITMLATDQDEGSNSQLTYSLEGPGMEAFSVDMDSGLVTTQRPLQSYERFNLTVVATDGGEPPLWGTTMLLVEVIDVNDNRPVFVRPPNGTILHIKEEIPLRSNVYEVYATDNDEGLNGAVRYSFLKTTGNRDWEYFTIDPISGLIQTAQRLDREKQAVYSLILVASDLGQPVPYETMQPLQVALEDIDDNEPLFVRPPKGSPQYQLLTVPEHSPRGTLVGNVTGAVDADEGPNAIVYYFIAAGDEDKNFHLQPDGRLLVLRDLDRETEATFSFIVKASSNRSWTPPRGPSPALDLLTDLTLQEVRVVLEDINDQPPRFTKAEYTAGVATDAKVGSELIQVLALDADIGNNSLVFYGILAIHYFRALANDSEDVGQVFTMGSVDGILRTFDLFMAYSPGYFVVDIVARDLAGHNDTAIIGIYILRDDQRVKIVINEIPDRVRGFEEEFIRLLSNITGAIVNTDDVQFHVDMKGRVNFAQTELLIHVVNRDTNRILDVDRVIQMIDENKEQLRNLFRNYNVLDVQPAISVQLPDDMSALQMAIIVLAILLFLAAMLFVLMNWYYRTIHKRKLKAIVAGSAGNRGFIDIMDMPNTNKYSFDGSNPVWLDPFCRNLELAAQAEHEDDLPENLSEIADLWNSPTRTHGTFGREPAAVKPDDDRYLRAAIQEYDNIAKLGQIIREGPIKGSLLKVVLEDYLRLKKLFAQRMVQKASSCHSSISELIHTDLEEEPGDHSPGQGSLRFRHKPPMELKGQDGIHMVHGSTGTLLATDLNSLPEDDQKGLDRSLETLTASEATAFERNARTESAKSTPLHKLRDVIMESPLEITEL</sequence>
<keyword id="KW-0002">3D-structure</keyword>
<keyword id="KW-0025">Alternative splicing</keyword>
<keyword id="KW-0106">Calcium</keyword>
<keyword id="KW-0130">Cell adhesion</keyword>
<keyword id="KW-1003">Cell membrane</keyword>
<keyword id="KW-0209">Deafness</keyword>
<keyword id="KW-0225">Disease variant</keyword>
<keyword id="KW-0325">Glycoprotein</keyword>
<keyword id="KW-1009">Hearing</keyword>
<keyword id="KW-0472">Membrane</keyword>
<keyword id="KW-0479">Metal-binding</keyword>
<keyword id="KW-1010">Non-syndromic deafness</keyword>
<keyword id="KW-1185">Reference proteome</keyword>
<keyword id="KW-0677">Repeat</keyword>
<keyword id="KW-0732">Signal</keyword>
<keyword id="KW-0812">Transmembrane</keyword>
<keyword id="KW-1133">Transmembrane helix</keyword>
<reference key="1">
    <citation type="journal article" date="2001" name="Nat. Genet.">
        <title>Mutations in Cdh23, encoding a new type of cadherin, cause stereocilia disorganization in waltzer, the mouse model for Usher syndrome type 1D.</title>
        <authorList>
            <person name="Di Palma F."/>
            <person name="Holme R.H."/>
            <person name="Bryda E.C."/>
            <person name="Belyantseva I.A."/>
            <person name="Pellegrino R."/>
            <person name="Kachar B."/>
            <person name="Steel K.P."/>
            <person name="Noben-Trauth K."/>
        </authorList>
    </citation>
    <scope>NUCLEOTIDE SEQUENCE [MRNA]</scope>
    <scope>TISSUE SPECIFICITY</scope>
    <scope>FUNCTION</scope>
    <source>
        <strain>C57BL/6J</strain>
    </source>
</reference>
<reference key="2">
    <citation type="journal article" date="2001" name="Genomics">
        <title>Mutations in Cdh23 cause nonsyndromic hearing loss in waltzer mice.</title>
        <authorList>
            <person name="Wilson S.M."/>
            <person name="Householder D.B."/>
            <person name="Coppola V."/>
            <person name="Tessarollo L."/>
            <person name="Fritzsch B."/>
            <person name="Lee E.-C."/>
            <person name="Goss D."/>
            <person name="Carlson G.A."/>
            <person name="Copeland N.G."/>
            <person name="Jenkins N.A."/>
        </authorList>
    </citation>
    <scope>NUCLEOTIDE SEQUENCE [MRNA] (ISOFORM 2)</scope>
    <source>
        <tissue>Brain</tissue>
    </source>
</reference>
<reference key="3">
    <citation type="journal article" date="2005" name="Dev. Biol.">
        <title>Spatiotemporal pattern and isoforms of cadherin 23 in wild type and waltzer mice during inner ear hair cell development.</title>
        <authorList>
            <person name="Lagziel A."/>
            <person name="Ahmed Z.M."/>
            <person name="Schultz J.M."/>
            <person name="Morell R.J."/>
            <person name="Belyantseva I.A."/>
            <person name="Friedman T.B."/>
        </authorList>
    </citation>
    <scope>NUCLEOTIDE SEQUENCE (ISOFORMS B1; B2; C1 AND C2)</scope>
    <source>
        <strain>C57BL/6J</strain>
    </source>
</reference>
<reference key="4">
    <citation type="journal article" date="2005" name="Science">
        <title>The transcriptional landscape of the mammalian genome.</title>
        <authorList>
            <person name="Carninci P."/>
            <person name="Kasukawa T."/>
            <person name="Katayama S."/>
            <person name="Gough J."/>
            <person name="Frith M.C."/>
            <person name="Maeda N."/>
            <person name="Oyama R."/>
            <person name="Ravasi T."/>
            <person name="Lenhard B."/>
            <person name="Wells C."/>
            <person name="Kodzius R."/>
            <person name="Shimokawa K."/>
            <person name="Bajic V.B."/>
            <person name="Brenner S.E."/>
            <person name="Batalov S."/>
            <person name="Forrest A.R."/>
            <person name="Zavolan M."/>
            <person name="Davis M.J."/>
            <person name="Wilming L.G."/>
            <person name="Aidinis V."/>
            <person name="Allen J.E."/>
            <person name="Ambesi-Impiombato A."/>
            <person name="Apweiler R."/>
            <person name="Aturaliya R.N."/>
            <person name="Bailey T.L."/>
            <person name="Bansal M."/>
            <person name="Baxter L."/>
            <person name="Beisel K.W."/>
            <person name="Bersano T."/>
            <person name="Bono H."/>
            <person name="Chalk A.M."/>
            <person name="Chiu K.P."/>
            <person name="Choudhary V."/>
            <person name="Christoffels A."/>
            <person name="Clutterbuck D.R."/>
            <person name="Crowe M.L."/>
            <person name="Dalla E."/>
            <person name="Dalrymple B.P."/>
            <person name="de Bono B."/>
            <person name="Della Gatta G."/>
            <person name="di Bernardo D."/>
            <person name="Down T."/>
            <person name="Engstrom P."/>
            <person name="Fagiolini M."/>
            <person name="Faulkner G."/>
            <person name="Fletcher C.F."/>
            <person name="Fukushima T."/>
            <person name="Furuno M."/>
            <person name="Futaki S."/>
            <person name="Gariboldi M."/>
            <person name="Georgii-Hemming P."/>
            <person name="Gingeras T.R."/>
            <person name="Gojobori T."/>
            <person name="Green R.E."/>
            <person name="Gustincich S."/>
            <person name="Harbers M."/>
            <person name="Hayashi Y."/>
            <person name="Hensch T.K."/>
            <person name="Hirokawa N."/>
            <person name="Hill D."/>
            <person name="Huminiecki L."/>
            <person name="Iacono M."/>
            <person name="Ikeo K."/>
            <person name="Iwama A."/>
            <person name="Ishikawa T."/>
            <person name="Jakt M."/>
            <person name="Kanapin A."/>
            <person name="Katoh M."/>
            <person name="Kawasawa Y."/>
            <person name="Kelso J."/>
            <person name="Kitamura H."/>
            <person name="Kitano H."/>
            <person name="Kollias G."/>
            <person name="Krishnan S.P."/>
            <person name="Kruger A."/>
            <person name="Kummerfeld S.K."/>
            <person name="Kurochkin I.V."/>
            <person name="Lareau L.F."/>
            <person name="Lazarevic D."/>
            <person name="Lipovich L."/>
            <person name="Liu J."/>
            <person name="Liuni S."/>
            <person name="McWilliam S."/>
            <person name="Madan Babu M."/>
            <person name="Madera M."/>
            <person name="Marchionni L."/>
            <person name="Matsuda H."/>
            <person name="Matsuzawa S."/>
            <person name="Miki H."/>
            <person name="Mignone F."/>
            <person name="Miyake S."/>
            <person name="Morris K."/>
            <person name="Mottagui-Tabar S."/>
            <person name="Mulder N."/>
            <person name="Nakano N."/>
            <person name="Nakauchi H."/>
            <person name="Ng P."/>
            <person name="Nilsson R."/>
            <person name="Nishiguchi S."/>
            <person name="Nishikawa S."/>
            <person name="Nori F."/>
            <person name="Ohara O."/>
            <person name="Okazaki Y."/>
            <person name="Orlando V."/>
            <person name="Pang K.C."/>
            <person name="Pavan W.J."/>
            <person name="Pavesi G."/>
            <person name="Pesole G."/>
            <person name="Petrovsky N."/>
            <person name="Piazza S."/>
            <person name="Reed J."/>
            <person name="Reid J.F."/>
            <person name="Ring B.Z."/>
            <person name="Ringwald M."/>
            <person name="Rost B."/>
            <person name="Ruan Y."/>
            <person name="Salzberg S.L."/>
            <person name="Sandelin A."/>
            <person name="Schneider C."/>
            <person name="Schoenbach C."/>
            <person name="Sekiguchi K."/>
            <person name="Semple C.A."/>
            <person name="Seno S."/>
            <person name="Sessa L."/>
            <person name="Sheng Y."/>
            <person name="Shibata Y."/>
            <person name="Shimada H."/>
            <person name="Shimada K."/>
            <person name="Silva D."/>
            <person name="Sinclair B."/>
            <person name="Sperling S."/>
            <person name="Stupka E."/>
            <person name="Sugiura K."/>
            <person name="Sultana R."/>
            <person name="Takenaka Y."/>
            <person name="Taki K."/>
            <person name="Tammoja K."/>
            <person name="Tan S.L."/>
            <person name="Tang S."/>
            <person name="Taylor M.S."/>
            <person name="Tegner J."/>
            <person name="Teichmann S.A."/>
            <person name="Ueda H.R."/>
            <person name="van Nimwegen E."/>
            <person name="Verardo R."/>
            <person name="Wei C.L."/>
            <person name="Yagi K."/>
            <person name="Yamanishi H."/>
            <person name="Zabarovsky E."/>
            <person name="Zhu S."/>
            <person name="Zimmer A."/>
            <person name="Hide W."/>
            <person name="Bult C."/>
            <person name="Grimmond S.M."/>
            <person name="Teasdale R.D."/>
            <person name="Liu E.T."/>
            <person name="Brusic V."/>
            <person name="Quackenbush J."/>
            <person name="Wahlestedt C."/>
            <person name="Mattick J.S."/>
            <person name="Hume D.A."/>
            <person name="Kai C."/>
            <person name="Sasaki D."/>
            <person name="Tomaru Y."/>
            <person name="Fukuda S."/>
            <person name="Kanamori-Katayama M."/>
            <person name="Suzuki M."/>
            <person name="Aoki J."/>
            <person name="Arakawa T."/>
            <person name="Iida J."/>
            <person name="Imamura K."/>
            <person name="Itoh M."/>
            <person name="Kato T."/>
            <person name="Kawaji H."/>
            <person name="Kawagashira N."/>
            <person name="Kawashima T."/>
            <person name="Kojima M."/>
            <person name="Kondo S."/>
            <person name="Konno H."/>
            <person name="Nakano K."/>
            <person name="Ninomiya N."/>
            <person name="Nishio T."/>
            <person name="Okada M."/>
            <person name="Plessy C."/>
            <person name="Shibata K."/>
            <person name="Shiraki T."/>
            <person name="Suzuki S."/>
            <person name="Tagami M."/>
            <person name="Waki K."/>
            <person name="Watahiki A."/>
            <person name="Okamura-Oho Y."/>
            <person name="Suzuki H."/>
            <person name="Kawai J."/>
            <person name="Hayashizaki Y."/>
        </authorList>
    </citation>
    <scope>NUCLEOTIDE SEQUENCE [LARGE SCALE MRNA]</scope>
    <source>
        <strain>C57BL/6J</strain>
        <tissue>Testis</tissue>
    </source>
</reference>
<reference key="5">
    <citation type="journal article" date="2009" name="PLoS Biol.">
        <title>Lineage-specific biology revealed by a finished genome assembly of the mouse.</title>
        <authorList>
            <person name="Church D.M."/>
            <person name="Goodstadt L."/>
            <person name="Hillier L.W."/>
            <person name="Zody M.C."/>
            <person name="Goldstein S."/>
            <person name="She X."/>
            <person name="Bult C.J."/>
            <person name="Agarwala R."/>
            <person name="Cherry J.L."/>
            <person name="DiCuccio M."/>
            <person name="Hlavina W."/>
            <person name="Kapustin Y."/>
            <person name="Meric P."/>
            <person name="Maglott D."/>
            <person name="Birtle Z."/>
            <person name="Marques A.C."/>
            <person name="Graves T."/>
            <person name="Zhou S."/>
            <person name="Teague B."/>
            <person name="Potamousis K."/>
            <person name="Churas C."/>
            <person name="Place M."/>
            <person name="Herschleb J."/>
            <person name="Runnheim R."/>
            <person name="Forrest D."/>
            <person name="Amos-Landgraf J."/>
            <person name="Schwartz D.C."/>
            <person name="Cheng Z."/>
            <person name="Lindblad-Toh K."/>
            <person name="Eichler E.E."/>
            <person name="Ponting C.P."/>
        </authorList>
    </citation>
    <scope>NUCLEOTIDE SEQUENCE [LARGE SCALE GENOMIC DNA]</scope>
    <source>
        <strain>C57BL/6J</strain>
    </source>
</reference>
<reference key="6">
    <citation type="journal article" date="2001" name="Gene">
        <title>Genomic structure, alternative splice forms and normal and mutant alleles of cadherin 23 (Cdh23).</title>
        <authorList>
            <person name="Di Palma F."/>
            <person name="Pellegrino R."/>
            <person name="Noben-Trauth K."/>
        </authorList>
    </citation>
    <scope>GENOMIC ORGANIZATION</scope>
    <scope>ALTERNATIVE SPLICING</scope>
    <scope>VARIANT WALTZER 2718-ASN--PRO-2720 DEL</scope>
    <scope>VARIANTS PRO-5; VAL-229; LYS-891; ILE-1137; ARG-1236; VAL-2025; VAL-2026; THR-2217; HIS-2222; ARG-2270 AND ALA-2617</scope>
    <source>
        <strain>C57BL/6J</strain>
        <strain>CAST/EiJ</strain>
    </source>
</reference>
<reference key="7">
    <citation type="journal article" date="2007" name="Nature">
        <title>Cadherin 23 and protocadherin 15 interact to form tip-link filaments in sensory hair cells.</title>
        <authorList>
            <person name="Kazmierczak P."/>
            <person name="Sakaguchi H."/>
            <person name="Tokita J."/>
            <person name="Wilson-Kubalek E.M."/>
            <person name="Milligan R.A."/>
            <person name="Muller U."/>
            <person name="Kachar B."/>
        </authorList>
    </citation>
    <scope>INTERACTION WITH PCDH15</scope>
</reference>
<reference key="8">
    <citation type="journal article" date="2010" name="Cell">
        <title>A tissue-specific atlas of mouse protein phosphorylation and expression.</title>
        <authorList>
            <person name="Huttlin E.L."/>
            <person name="Jedrychowski M.P."/>
            <person name="Elias J.E."/>
            <person name="Goswami T."/>
            <person name="Rad R."/>
            <person name="Beausoleil S.A."/>
            <person name="Villen J."/>
            <person name="Haas W."/>
            <person name="Sowa M.E."/>
            <person name="Gygi S.P."/>
        </authorList>
    </citation>
    <scope>IDENTIFICATION BY MASS SPECTROMETRY [LARGE SCALE ANALYSIS]</scope>
    <source>
        <tissue>Testis</tissue>
    </source>
</reference>
<reference key="9">
    <citation type="journal article" date="2016" name="Sci. Rep.">
        <title>Cadherin 23-C regulates microtubule networks by modifying CAMSAP3's function.</title>
        <authorList>
            <person name="Takahashi S."/>
            <person name="Mui V.J."/>
            <person name="Rosenberg S.K."/>
            <person name="Homma K."/>
            <person name="Cheatham M.A."/>
            <person name="Zheng J."/>
        </authorList>
    </citation>
    <scope>INTERACTION WITH CAMSAP3</scope>
</reference>
<reference key="10">
    <citation type="journal article" date="2010" name="Neuron">
        <title>Structural determinants of cadherin-23 function in hearing and deafness.</title>
        <authorList>
            <person name="Sotomayor M."/>
            <person name="Weihofen W.A."/>
            <person name="Gaudet R."/>
            <person name="Corey D.P."/>
        </authorList>
    </citation>
    <scope>X-RAY CRYSTALLOGRAPHY (1.5 ANGSTROMS) OF 24-228 IN COMPLEX WITH CALCIUM</scope>
</reference>
<reference key="11">
    <citation type="journal article" date="2010" name="Proc. Natl. Acad. Sci. U.S.A.">
        <title>Structure of the N terminus of cadherin 23 reveals a new adhesion mechanism for a subset of cadherin superfamily members.</title>
        <authorList>
            <person name="Elledge H.M."/>
            <person name="Kazmierczak P."/>
            <person name="Clark P."/>
            <person name="Joseph J.S."/>
            <person name="Kolatkar A."/>
            <person name="Kuhn P."/>
            <person name="Muller U."/>
        </authorList>
    </citation>
    <scope>X-RAY CRYSTALLOGRAPHY (1.1 ANGSTROMS) OF 24-233 IN COMPLEX WITH CALCIUM</scope>
    <scope>MUTAGENESIS OF ASN-26 AND ARG-27</scope>
    <scope>INTERACTION WITH PCDH15</scope>
</reference>
<reference key="12">
    <citation type="journal article" date="2012" name="Nature">
        <title>Structure of a force-conveying cadherin bond essential for inner-ear mechanotransduction.</title>
        <authorList>
            <person name="Sotomayor M."/>
            <person name="Weihofen W.A."/>
            <person name="Gaudet R."/>
            <person name="Corey D.P."/>
        </authorList>
    </citation>
    <scope>X-RAY CRYSTALLOGRAPHY (1.65 ANGSTROMS) OF 24-228 IN COMPLEX WITH CALCIUM IONS AND PCDH15</scope>
    <scope>SUBUNIT</scope>
    <scope>MUTAGENESIS OF LEU-168</scope>
</reference>